<proteinExistence type="evidence at protein level"/>
<name>HS71A_HUMAN</name>
<organism>
    <name type="scientific">Homo sapiens</name>
    <name type="common">Human</name>
    <dbReference type="NCBI Taxonomy" id="9606"/>
    <lineage>
        <taxon>Eukaryota</taxon>
        <taxon>Metazoa</taxon>
        <taxon>Chordata</taxon>
        <taxon>Craniata</taxon>
        <taxon>Vertebrata</taxon>
        <taxon>Euteleostomi</taxon>
        <taxon>Mammalia</taxon>
        <taxon>Eutheria</taxon>
        <taxon>Euarchontoglires</taxon>
        <taxon>Primates</taxon>
        <taxon>Haplorrhini</taxon>
        <taxon>Catarrhini</taxon>
        <taxon>Hominidae</taxon>
        <taxon>Homo</taxon>
    </lineage>
</organism>
<reference key="1">
    <citation type="journal article" date="1985" name="Proc. Natl. Acad. Sci. U.S.A.">
        <title>Conserved features of eukaryotic hsp70 genes revealed by comparison with the nucleotide sequence of human hsp70.</title>
        <authorList>
            <person name="Hunt C."/>
            <person name="Morimoto R.I."/>
        </authorList>
    </citation>
    <scope>NUCLEOTIDE SEQUENCE [GENOMIC DNA]</scope>
    <scope>ALTERNATIVE SPLICING (ISOFORM 1)</scope>
</reference>
<reference key="2">
    <citation type="journal article" date="1990" name="Immunogenetics">
        <title>Structure and expression of the three MHC-linked HSP70 genes.</title>
        <authorList>
            <person name="Milner C.M."/>
            <person name="Campbell R.D."/>
        </authorList>
    </citation>
    <scope>NUCLEOTIDE SEQUENCE [GENOMIC DNA]</scope>
    <scope>ALTERNATIVE SPLICING (ISOFORM 1)</scope>
</reference>
<reference key="3">
    <citation type="submission" date="1999-09" db="EMBL/GenBank/DDBJ databases">
        <title>Homo sapiens 2,229,817bp genomic DNA of 6p21.3 HLA class I region.</title>
        <authorList>
            <person name="Shiina S."/>
            <person name="Tamiya G."/>
            <person name="Oka A."/>
            <person name="Inoko H."/>
        </authorList>
    </citation>
    <scope>NUCLEOTIDE SEQUENCE [LARGE SCALE GENOMIC DNA]</scope>
    <scope>ALTERNATIVE SPLICING (ISOFORM 1)</scope>
</reference>
<reference key="4">
    <citation type="journal article" date="2003" name="Genome Res.">
        <title>Analysis of the gene-dense major histocompatibility complex class III region and its comparison to mouse.</title>
        <authorList>
            <person name="Xie T."/>
            <person name="Rowen L."/>
            <person name="Aguado B."/>
            <person name="Ahearn M.E."/>
            <person name="Madan A."/>
            <person name="Qin S."/>
            <person name="Campbell R.D."/>
            <person name="Hood L."/>
        </authorList>
    </citation>
    <scope>NUCLEOTIDE SEQUENCE [LARGE SCALE GENOMIC DNA]</scope>
    <scope>VARIANT ASP-110</scope>
    <scope>ALTERNATIVE SPLICING (ISOFORM 1)</scope>
</reference>
<reference key="5">
    <citation type="journal article" date="2004" name="Nat. Genet.">
        <title>Complete sequencing and characterization of 21,243 full-length human cDNAs.</title>
        <authorList>
            <person name="Ota T."/>
            <person name="Suzuki Y."/>
            <person name="Nishikawa T."/>
            <person name="Otsuki T."/>
            <person name="Sugiyama T."/>
            <person name="Irie R."/>
            <person name="Wakamatsu A."/>
            <person name="Hayashi K."/>
            <person name="Sato H."/>
            <person name="Nagai K."/>
            <person name="Kimura K."/>
            <person name="Makita H."/>
            <person name="Sekine M."/>
            <person name="Obayashi M."/>
            <person name="Nishi T."/>
            <person name="Shibahara T."/>
            <person name="Tanaka T."/>
            <person name="Ishii S."/>
            <person name="Yamamoto J."/>
            <person name="Saito K."/>
            <person name="Kawai Y."/>
            <person name="Isono Y."/>
            <person name="Nakamura Y."/>
            <person name="Nagahari K."/>
            <person name="Murakami K."/>
            <person name="Yasuda T."/>
            <person name="Iwayanagi T."/>
            <person name="Wagatsuma M."/>
            <person name="Shiratori A."/>
            <person name="Sudo H."/>
            <person name="Hosoiri T."/>
            <person name="Kaku Y."/>
            <person name="Kodaira H."/>
            <person name="Kondo H."/>
            <person name="Sugawara M."/>
            <person name="Takahashi M."/>
            <person name="Kanda K."/>
            <person name="Yokoi T."/>
            <person name="Furuya T."/>
            <person name="Kikkawa E."/>
            <person name="Omura Y."/>
            <person name="Abe K."/>
            <person name="Kamihara K."/>
            <person name="Katsuta N."/>
            <person name="Sato K."/>
            <person name="Tanikawa M."/>
            <person name="Yamazaki M."/>
            <person name="Ninomiya K."/>
            <person name="Ishibashi T."/>
            <person name="Yamashita H."/>
            <person name="Murakawa K."/>
            <person name="Fujimori K."/>
            <person name="Tanai H."/>
            <person name="Kimata M."/>
            <person name="Watanabe M."/>
            <person name="Hiraoka S."/>
            <person name="Chiba Y."/>
            <person name="Ishida S."/>
            <person name="Ono Y."/>
            <person name="Takiguchi S."/>
            <person name="Watanabe S."/>
            <person name="Yosida M."/>
            <person name="Hotuta T."/>
            <person name="Kusano J."/>
            <person name="Kanehori K."/>
            <person name="Takahashi-Fujii A."/>
            <person name="Hara H."/>
            <person name="Tanase T.-O."/>
            <person name="Nomura Y."/>
            <person name="Togiya S."/>
            <person name="Komai F."/>
            <person name="Hara R."/>
            <person name="Takeuchi K."/>
            <person name="Arita M."/>
            <person name="Imose N."/>
            <person name="Musashino K."/>
            <person name="Yuuki H."/>
            <person name="Oshima A."/>
            <person name="Sasaki N."/>
            <person name="Aotsuka S."/>
            <person name="Yoshikawa Y."/>
            <person name="Matsunawa H."/>
            <person name="Ichihara T."/>
            <person name="Shiohata N."/>
            <person name="Sano S."/>
            <person name="Moriya S."/>
            <person name="Momiyama H."/>
            <person name="Satoh N."/>
            <person name="Takami S."/>
            <person name="Terashima Y."/>
            <person name="Suzuki O."/>
            <person name="Nakagawa S."/>
            <person name="Senoh A."/>
            <person name="Mizoguchi H."/>
            <person name="Goto Y."/>
            <person name="Shimizu F."/>
            <person name="Wakebe H."/>
            <person name="Hishigaki H."/>
            <person name="Watanabe T."/>
            <person name="Sugiyama A."/>
            <person name="Takemoto M."/>
            <person name="Kawakami B."/>
            <person name="Yamazaki M."/>
            <person name="Watanabe K."/>
            <person name="Kumagai A."/>
            <person name="Itakura S."/>
            <person name="Fukuzumi Y."/>
            <person name="Fujimori Y."/>
            <person name="Komiyama M."/>
            <person name="Tashiro H."/>
            <person name="Tanigami A."/>
            <person name="Fujiwara T."/>
            <person name="Ono T."/>
            <person name="Yamada K."/>
            <person name="Fujii Y."/>
            <person name="Ozaki K."/>
            <person name="Hirao M."/>
            <person name="Ohmori Y."/>
            <person name="Kawabata A."/>
            <person name="Hikiji T."/>
            <person name="Kobatake N."/>
            <person name="Inagaki H."/>
            <person name="Ikema Y."/>
            <person name="Okamoto S."/>
            <person name="Okitani R."/>
            <person name="Kawakami T."/>
            <person name="Noguchi S."/>
            <person name="Itoh T."/>
            <person name="Shigeta K."/>
            <person name="Senba T."/>
            <person name="Matsumura K."/>
            <person name="Nakajima Y."/>
            <person name="Mizuno T."/>
            <person name="Morinaga M."/>
            <person name="Sasaki M."/>
            <person name="Togashi T."/>
            <person name="Oyama M."/>
            <person name="Hata H."/>
            <person name="Watanabe M."/>
            <person name="Komatsu T."/>
            <person name="Mizushima-Sugano J."/>
            <person name="Satoh T."/>
            <person name="Shirai Y."/>
            <person name="Takahashi Y."/>
            <person name="Nakagawa K."/>
            <person name="Okumura K."/>
            <person name="Nagase T."/>
            <person name="Nomura N."/>
            <person name="Kikuchi H."/>
            <person name="Masuho Y."/>
            <person name="Yamashita R."/>
            <person name="Nakai K."/>
            <person name="Yada T."/>
            <person name="Nakamura Y."/>
            <person name="Ohara O."/>
            <person name="Isogai T."/>
            <person name="Sugano S."/>
        </authorList>
    </citation>
    <scope>NUCLEOTIDE SEQUENCE [LARGE SCALE MRNA] (ISOFORM 2)</scope>
    <source>
        <tissue>Uterus</tissue>
    </source>
</reference>
<reference key="6">
    <citation type="submission" date="2006-02" db="EMBL/GenBank/DDBJ databases">
        <authorList>
            <consortium name="NIEHS SNPs program"/>
        </authorList>
    </citation>
    <scope>NUCLEOTIDE SEQUENCE [GENOMIC DNA]</scope>
    <scope>ALTERNATIVE SPLICING (ISOFORM 1)</scope>
    <scope>VARIANT ASP-110</scope>
</reference>
<reference key="7">
    <citation type="journal article" date="2003" name="Nature">
        <title>The DNA sequence and analysis of human chromosome 6.</title>
        <authorList>
            <person name="Mungall A.J."/>
            <person name="Palmer S.A."/>
            <person name="Sims S.K."/>
            <person name="Edwards C.A."/>
            <person name="Ashurst J.L."/>
            <person name="Wilming L."/>
            <person name="Jones M.C."/>
            <person name="Horton R."/>
            <person name="Hunt S.E."/>
            <person name="Scott C.E."/>
            <person name="Gilbert J.G.R."/>
            <person name="Clamp M.E."/>
            <person name="Bethel G."/>
            <person name="Milne S."/>
            <person name="Ainscough R."/>
            <person name="Almeida J.P."/>
            <person name="Ambrose K.D."/>
            <person name="Andrews T.D."/>
            <person name="Ashwell R.I.S."/>
            <person name="Babbage A.K."/>
            <person name="Bagguley C.L."/>
            <person name="Bailey J."/>
            <person name="Banerjee R."/>
            <person name="Barker D.J."/>
            <person name="Barlow K.F."/>
            <person name="Bates K."/>
            <person name="Beare D.M."/>
            <person name="Beasley H."/>
            <person name="Beasley O."/>
            <person name="Bird C.P."/>
            <person name="Blakey S.E."/>
            <person name="Bray-Allen S."/>
            <person name="Brook J."/>
            <person name="Brown A.J."/>
            <person name="Brown J.Y."/>
            <person name="Burford D.C."/>
            <person name="Burrill W."/>
            <person name="Burton J."/>
            <person name="Carder C."/>
            <person name="Carter N.P."/>
            <person name="Chapman J.C."/>
            <person name="Clark S.Y."/>
            <person name="Clark G."/>
            <person name="Clee C.M."/>
            <person name="Clegg S."/>
            <person name="Cobley V."/>
            <person name="Collier R.E."/>
            <person name="Collins J.E."/>
            <person name="Colman L.K."/>
            <person name="Corby N.R."/>
            <person name="Coville G.J."/>
            <person name="Culley K.M."/>
            <person name="Dhami P."/>
            <person name="Davies J."/>
            <person name="Dunn M."/>
            <person name="Earthrowl M.E."/>
            <person name="Ellington A.E."/>
            <person name="Evans K.A."/>
            <person name="Faulkner L."/>
            <person name="Francis M.D."/>
            <person name="Frankish A."/>
            <person name="Frankland J."/>
            <person name="French L."/>
            <person name="Garner P."/>
            <person name="Garnett J."/>
            <person name="Ghori M.J."/>
            <person name="Gilby L.M."/>
            <person name="Gillson C.J."/>
            <person name="Glithero R.J."/>
            <person name="Grafham D.V."/>
            <person name="Grant M."/>
            <person name="Gribble S."/>
            <person name="Griffiths C."/>
            <person name="Griffiths M.N.D."/>
            <person name="Hall R."/>
            <person name="Halls K.S."/>
            <person name="Hammond S."/>
            <person name="Harley J.L."/>
            <person name="Hart E.A."/>
            <person name="Heath P.D."/>
            <person name="Heathcott R."/>
            <person name="Holmes S.J."/>
            <person name="Howden P.J."/>
            <person name="Howe K.L."/>
            <person name="Howell G.R."/>
            <person name="Huckle E."/>
            <person name="Humphray S.J."/>
            <person name="Humphries M.D."/>
            <person name="Hunt A.R."/>
            <person name="Johnson C.M."/>
            <person name="Joy A.A."/>
            <person name="Kay M."/>
            <person name="Keenan S.J."/>
            <person name="Kimberley A.M."/>
            <person name="King A."/>
            <person name="Laird G.K."/>
            <person name="Langford C."/>
            <person name="Lawlor S."/>
            <person name="Leongamornlert D.A."/>
            <person name="Leversha M."/>
            <person name="Lloyd C.R."/>
            <person name="Lloyd D.M."/>
            <person name="Loveland J.E."/>
            <person name="Lovell J."/>
            <person name="Martin S."/>
            <person name="Mashreghi-Mohammadi M."/>
            <person name="Maslen G.L."/>
            <person name="Matthews L."/>
            <person name="McCann O.T."/>
            <person name="McLaren S.J."/>
            <person name="McLay K."/>
            <person name="McMurray A."/>
            <person name="Moore M.J.F."/>
            <person name="Mullikin J.C."/>
            <person name="Niblett D."/>
            <person name="Nickerson T."/>
            <person name="Novik K.L."/>
            <person name="Oliver K."/>
            <person name="Overton-Larty E.K."/>
            <person name="Parker A."/>
            <person name="Patel R."/>
            <person name="Pearce A.V."/>
            <person name="Peck A.I."/>
            <person name="Phillimore B.J.C.T."/>
            <person name="Phillips S."/>
            <person name="Plumb R.W."/>
            <person name="Porter K.M."/>
            <person name="Ramsey Y."/>
            <person name="Ranby S.A."/>
            <person name="Rice C.M."/>
            <person name="Ross M.T."/>
            <person name="Searle S.M."/>
            <person name="Sehra H.K."/>
            <person name="Sheridan E."/>
            <person name="Skuce C.D."/>
            <person name="Smith S."/>
            <person name="Smith M."/>
            <person name="Spraggon L."/>
            <person name="Squares S.L."/>
            <person name="Steward C.A."/>
            <person name="Sycamore N."/>
            <person name="Tamlyn-Hall G."/>
            <person name="Tester J."/>
            <person name="Theaker A.J."/>
            <person name="Thomas D.W."/>
            <person name="Thorpe A."/>
            <person name="Tracey A."/>
            <person name="Tromans A."/>
            <person name="Tubby B."/>
            <person name="Wall M."/>
            <person name="Wallis J.M."/>
            <person name="West A.P."/>
            <person name="White S.S."/>
            <person name="Whitehead S.L."/>
            <person name="Whittaker H."/>
            <person name="Wild A."/>
            <person name="Willey D.J."/>
            <person name="Wilmer T.E."/>
            <person name="Wood J.M."/>
            <person name="Wray P.W."/>
            <person name="Wyatt J.C."/>
            <person name="Young L."/>
            <person name="Younger R.M."/>
            <person name="Bentley D.R."/>
            <person name="Coulson A."/>
            <person name="Durbin R.M."/>
            <person name="Hubbard T."/>
            <person name="Sulston J.E."/>
            <person name="Dunham I."/>
            <person name="Rogers J."/>
            <person name="Beck S."/>
        </authorList>
    </citation>
    <scope>NUCLEOTIDE SEQUENCE [LARGE SCALE GENOMIC DNA]</scope>
</reference>
<reference key="8">
    <citation type="journal article" date="2004" name="Genome Res.">
        <title>The status, quality, and expansion of the NIH full-length cDNA project: the Mammalian Gene Collection (MGC).</title>
        <authorList>
            <consortium name="The MGC Project Team"/>
        </authorList>
    </citation>
    <scope>NUCLEOTIDE SEQUENCE [LARGE SCALE MRNA] (ISOFORM 1)</scope>
    <source>
        <tissue>Brain</tissue>
        <tissue>Muscle</tissue>
        <tissue>Pancreas</tissue>
        <tissue>PNS</tissue>
        <tissue>Skin</tissue>
    </source>
</reference>
<reference key="9">
    <citation type="journal article" date="1989" name="Proc. Natl. Acad. Sci. U.S.A.">
        <title>Human major histocompatibility complex contains genes for the major heat shock protein HSP70.</title>
        <authorList>
            <person name="Sargent C.A."/>
            <person name="Dunham I."/>
            <person name="Trowsdale J."/>
            <person name="Campbell R.D."/>
        </authorList>
    </citation>
    <scope>NUCLEOTIDE SEQUENCE [GENOMIC DNA] OF 1-36</scope>
</reference>
<reference key="10">
    <citation type="journal article" date="1986" name="Nucleic Acids Res.">
        <title>In vitro transcription of a human hsp 70 heat shock gene by extracts prepared from heat-shocked and non-heat-shocked human cells.</title>
        <authorList>
            <person name="Drabent B."/>
            <person name="Genthe A."/>
            <person name="Benecke B.-J."/>
        </authorList>
    </citation>
    <scope>NUCLEOTIDE SEQUENCE [GENOMIC DNA] OF 1-22 AND 617-641</scope>
</reference>
<reference key="11">
    <citation type="submission" date="2009-03" db="UniProtKB">
        <authorList>
            <person name="Bienvenut W.V."/>
            <person name="Waridel P."/>
            <person name="Quadroni M."/>
        </authorList>
    </citation>
    <scope>PROTEIN SEQUENCE OF 4-49; 57-71; 77-155; 160-187; 221-247; 273-311; 326-342; 349-357; 362-416; 424-447; 459-469; 510-517; 540-550; 574-595 AND 598-641</scope>
    <scope>IDENTIFICATION BY MASS SPECTROMETRY</scope>
    <source>
        <tissue>Embryonic kidney</tissue>
    </source>
</reference>
<reference key="12">
    <citation type="submission" date="2008-12" db="UniProtKB">
        <authorList>
            <person name="Lubec G."/>
            <person name="Afjehi-Sadat L."/>
            <person name="Chen W.-Q."/>
            <person name="Sun Y."/>
        </authorList>
    </citation>
    <scope>PROTEIN SEQUENCE OF 37-49; 57-71; 78-88; 113-126; 160-187; 221-247; 302-311; 329-342; 349-357; 362-384; 540-550 AND 574-589</scope>
    <scope>IDENTIFICATION BY MASS SPECTROMETRY</scope>
    <source>
        <tissue>Brain</tissue>
        <tissue>Cajal-Retzius cell</tissue>
        <tissue>Fetal brain cortex</tissue>
    </source>
</reference>
<reference key="13">
    <citation type="journal article" date="2013" name="PLoS Genet.">
        <title>A newly uncovered group of distantly related lysine methyltransferases preferentially interact with molecular chaperones to regulate their activity.</title>
        <authorList>
            <person name="Cloutier P."/>
            <person name="Lavallee-Adam M."/>
            <person name="Faubert D."/>
            <person name="Blanchette M."/>
            <person name="Coulombe B."/>
        </authorList>
    </citation>
    <scope>PROTEIN SEQUENCE OF 551-567</scope>
    <scope>METHYLATION AT LYS-561</scope>
    <scope>MUTAGENESIS OF LYS-561</scope>
    <scope>IDENTIFICATION BY MASS SPECTROMETRY</scope>
</reference>
<reference key="14">
    <citation type="journal article" date="1994" name="Mol. Cell. Biol.">
        <title>Interaction between heat shock factor and hsp70 is insufficient to suppress induction of DNA-binding activity in vivo.</title>
        <authorList>
            <person name="Rabindran S.K."/>
            <person name="Wisniewski J."/>
            <person name="Li L."/>
            <person name="Li G.C."/>
            <person name="Wu C."/>
        </authorList>
    </citation>
    <scope>INTERACTION WITH HSF1</scope>
</reference>
<reference key="15">
    <citation type="journal article" date="1998" name="Genes Dev.">
        <title>Molecular chaperones as HSF1-specific transcriptional repressors.</title>
        <authorList>
            <person name="Shi Y."/>
            <person name="Mosser D.D."/>
            <person name="Morimoto R.I."/>
        </authorList>
    </citation>
    <scope>FUNCTION</scope>
    <scope>INTERACTION WITH HSF1</scope>
</reference>
<reference key="16">
    <citation type="journal article" date="2001" name="J. Biol. Chem.">
        <title>Stable association of hsp90 and p23, but Not hsp70, with active human telomerase.</title>
        <authorList>
            <person name="Forsythe H.L."/>
            <person name="Jarvis J.L."/>
            <person name="Turner J.W."/>
            <person name="Elmore L.W."/>
            <person name="Holt S.E."/>
        </authorList>
    </citation>
    <scope>INTERACTION WITH TERT</scope>
</reference>
<reference key="17">
    <citation type="journal article" date="2003" name="EMBO J.">
        <title>Cofactor Tpr2 combines two TPR domains and a J domain to regulate the Hsp70/Hsp90 chaperone system.</title>
        <authorList>
            <person name="Brychzy A."/>
            <person name="Rein T."/>
            <person name="Winklhofer K.F."/>
            <person name="Hartl F.U."/>
            <person name="Young J.C."/>
            <person name="Obermann W.M."/>
        </authorList>
    </citation>
    <scope>INTERACTION WITH DNAJC7</scope>
</reference>
<reference key="18">
    <citation type="journal article" date="2005" name="Biochem. Biophys. Res. Commun.">
        <title>Phosphorylation and binding partner analysis of the TSC1-TSC2 complex.</title>
        <authorList>
            <person name="Nellist M."/>
            <person name="Burgers P.C."/>
            <person name="van den Ouweland A.M.W."/>
            <person name="Halley D.J.J."/>
            <person name="Luider T.M."/>
        </authorList>
    </citation>
    <scope>INTERACTION WITH TSC2</scope>
    <scope>IDENTIFICATION BY MASS SPECTROMETRY</scope>
</reference>
<reference key="19">
    <citation type="journal article" date="2005" name="Biochem. J.">
        <title>Human protein phosphatase 5 dissociates from heat-shock proteins and is proteolytically activated in response to arachidonic acid and the microtubule-depolymerizing drug nocodazole.</title>
        <authorList>
            <person name="Zeke T."/>
            <person name="Morrice N."/>
            <person name="Vazquez-Martin C."/>
            <person name="Cohen P.T."/>
        </authorList>
    </citation>
    <scope>INTERACTION WITH PPP5C</scope>
    <scope>IDENTIFICATION BY MASS SPECTROMETRY</scope>
</reference>
<reference key="20">
    <citation type="journal article" date="2006" name="Cell">
        <title>Global, in vivo, and site-specific phosphorylation dynamics in signaling networks.</title>
        <authorList>
            <person name="Olsen J.V."/>
            <person name="Blagoev B."/>
            <person name="Gnad F."/>
            <person name="Macek B."/>
            <person name="Kumar C."/>
            <person name="Mortensen P."/>
            <person name="Mann M."/>
        </authorList>
    </citation>
    <scope>IDENTIFICATION BY MASS SPECTROMETRY [LARGE SCALE ANALYSIS]</scope>
    <source>
        <tissue>Cervix carcinoma</tissue>
    </source>
</reference>
<reference key="21">
    <citation type="journal article" date="2006" name="DNA Cell Biol.">
        <title>The disordered amino-terminus of SIMPL interacts with members of the 70-kDa heat-shock protein family.</title>
        <authorList>
            <person name="Haag Breese E."/>
            <person name="Uversky V.N."/>
            <person name="Georgiadis M.M."/>
            <person name="Harrington M.A."/>
        </authorList>
    </citation>
    <scope>INTERACTION WITH IRAK1BP1</scope>
    <scope>IDENTIFICATION BY MASS SPECTROMETRY</scope>
</reference>
<reference key="22">
    <citation type="journal article" date="2006" name="J. Virol.">
        <title>The peptide-binding and ATPase domains of recombinant hsc70 are required to interact with rotavirus and reduce its infectivity.</title>
        <authorList>
            <person name="Perez-Vargas J."/>
            <person name="Romero P."/>
            <person name="Lopez S."/>
            <person name="Arias C.F."/>
        </authorList>
    </citation>
    <scope>FUNCTION AS A RECEPTOR FOR ROTAVIRUS A</scope>
</reference>
<reference key="23">
    <citation type="journal article" date="2007" name="Biochem. Biophys. Res. Commun.">
        <title>HDJC9, a novel human type C DnaJ/HSP40 member interacts with and cochaperones HSP70 through the J domain.</title>
        <authorList>
            <person name="Han C."/>
            <person name="Chen T."/>
            <person name="Li N."/>
            <person name="Yang M."/>
            <person name="Wan T."/>
            <person name="Cao X."/>
        </authorList>
    </citation>
    <scope>INTERACTION WITH DNAJC9</scope>
</reference>
<reference key="24">
    <citation type="journal article" date="2007" name="Mol. Cell. Proteomics">
        <title>Molecular composition of IMP1 ribonucleoprotein granules.</title>
        <authorList>
            <person name="Joeson L."/>
            <person name="Vikesaa J."/>
            <person name="Krogh A."/>
            <person name="Nielsen L.K."/>
            <person name="Hansen T."/>
            <person name="Borup R."/>
            <person name="Johnsen A.H."/>
            <person name="Christiansen J."/>
            <person name="Nielsen F.C."/>
        </authorList>
    </citation>
    <scope>IDENTIFICATION IN A MRNP GRANULE COMPLEX</scope>
    <scope>IDENTIFICATION BY MASS SPECTROMETRY</scope>
    <scope>SUBCELLULAR LOCATION</scope>
</reference>
<reference key="25">
    <citation type="journal article" date="2007" name="J. Immunol.">
        <title>Heat shock protein 90 associates with monarch-1 and regulates its ability to promote degradation of NF-kappaB-inducing kinase.</title>
        <authorList>
            <person name="Arthur J.C."/>
            <person name="Lich J.D."/>
            <person name="Aziz R.K."/>
            <person name="Kotb M."/>
            <person name="Ting J.P."/>
        </authorList>
    </citation>
    <scope>INTERACTION WITH NLRP12</scope>
</reference>
<reference key="26">
    <citation type="journal article" date="2008" name="Biochemistry">
        <title>Role of the cochaperone Tpr2 in Hsp90 chaperoning.</title>
        <authorList>
            <person name="Moffatt N.S."/>
            <person name="Bruinsma E."/>
            <person name="Uhl C."/>
            <person name="Obermann W.M."/>
            <person name="Toft D."/>
        </authorList>
    </citation>
    <scope>INTERACTION WITH DNAJC7</scope>
</reference>
<reference key="27">
    <citation type="journal article" date="2008" name="Mol. Cell">
        <title>Kinase-selective enrichment enables quantitative phosphoproteomics of the kinome across the cell cycle.</title>
        <authorList>
            <person name="Daub H."/>
            <person name="Olsen J.V."/>
            <person name="Bairlein M."/>
            <person name="Gnad F."/>
            <person name="Oppermann F.S."/>
            <person name="Korner R."/>
            <person name="Greff Z."/>
            <person name="Keri G."/>
            <person name="Stemmann O."/>
            <person name="Mann M."/>
        </authorList>
    </citation>
    <scope>IDENTIFICATION BY MASS SPECTROMETRY [LARGE SCALE ANALYSIS]</scope>
    <source>
        <tissue>Cervix carcinoma</tissue>
    </source>
</reference>
<reference key="28">
    <citation type="journal article" date="2009" name="Anal. Chem.">
        <title>Lys-N and trypsin cover complementary parts of the phosphoproteome in a refined SCX-based approach.</title>
        <authorList>
            <person name="Gauci S."/>
            <person name="Helbig A.O."/>
            <person name="Slijper M."/>
            <person name="Krijgsveld J."/>
            <person name="Heck A.J."/>
            <person name="Mohammed S."/>
        </authorList>
    </citation>
    <scope>ACETYLATION [LARGE SCALE ANALYSIS] AT ALA-2</scope>
    <scope>CLEAVAGE OF INITIATOR METHIONINE [LARGE SCALE ANALYSIS]</scope>
    <scope>IDENTIFICATION BY MASS SPECTROMETRY [LARGE SCALE ANALYSIS]</scope>
</reference>
<reference key="29">
    <citation type="journal article" date="2009" name="Science">
        <title>Lysine acetylation targets protein complexes and co-regulates major cellular functions.</title>
        <authorList>
            <person name="Choudhary C."/>
            <person name="Kumar C."/>
            <person name="Gnad F."/>
            <person name="Nielsen M.L."/>
            <person name="Rehman M."/>
            <person name="Walther T.C."/>
            <person name="Olsen J.V."/>
            <person name="Mann M."/>
        </authorList>
    </citation>
    <scope>ACETYLATION [LARGE SCALE ANALYSIS] AT LYS-108; LYS-246 AND LYS-348</scope>
    <scope>IDENTIFICATION BY MASS SPECTROMETRY [LARGE SCALE ANALYSIS]</scope>
</reference>
<reference key="30">
    <citation type="journal article" date="2010" name="J. Biol. Chem.">
        <title>Hsp70 interacts with the retroviral restriction factor TRIM5alpha and assists the folding of TRIM5alpha.</title>
        <authorList>
            <person name="Hwang C.Y."/>
            <person name="Holl J."/>
            <person name="Rajan D."/>
            <person name="Lee Y."/>
            <person name="Kim S."/>
            <person name="Um M."/>
            <person name="Kwon K.S."/>
            <person name="Song B."/>
        </authorList>
    </citation>
    <scope>INTERACTION WITH TRIM5</scope>
</reference>
<reference key="31">
    <citation type="journal article" date="2010" name="Sci. Signal.">
        <title>Quantitative phosphoproteomics reveals widespread full phosphorylation site occupancy during mitosis.</title>
        <authorList>
            <person name="Olsen J.V."/>
            <person name="Vermeulen M."/>
            <person name="Santamaria A."/>
            <person name="Kumar C."/>
            <person name="Miller M.L."/>
            <person name="Jensen L.J."/>
            <person name="Gnad F."/>
            <person name="Cox J."/>
            <person name="Jensen T.S."/>
            <person name="Nigg E.A."/>
            <person name="Brunak S."/>
            <person name="Mann M."/>
        </authorList>
    </citation>
    <scope>PHOSPHORYLATION [LARGE SCALE ANALYSIS] AT SER-631; SER-633 AND THR-636</scope>
    <scope>IDENTIFICATION BY MASS SPECTROMETRY [LARGE SCALE ANALYSIS]</scope>
    <source>
        <tissue>Cervix carcinoma</tissue>
    </source>
</reference>
<reference key="32">
    <citation type="journal article" date="2011" name="BMC Syst. Biol.">
        <title>Initial characterization of the human central proteome.</title>
        <authorList>
            <person name="Burkard T.R."/>
            <person name="Planyavsky M."/>
            <person name="Kaupe I."/>
            <person name="Breitwieser F.P."/>
            <person name="Buerckstuemmer T."/>
            <person name="Bennett K.L."/>
            <person name="Superti-Furga G."/>
            <person name="Colinge J."/>
        </authorList>
    </citation>
    <scope>IDENTIFICATION BY MASS SPECTROMETRY [LARGE SCALE ANALYSIS]</scope>
</reference>
<reference key="33">
    <citation type="journal article" date="2011" name="J. Biol. Chem.">
        <title>ChChd3, an inner mitochondrial membrane protein, is essential for maintaining crista integrity and mitochondrial function.</title>
        <authorList>
            <person name="Darshi M."/>
            <person name="Mendiola V.L."/>
            <person name="Mackey M.R."/>
            <person name="Murphy A.N."/>
            <person name="Koller A."/>
            <person name="Perkins G.A."/>
            <person name="Ellisman M.H."/>
            <person name="Taylor S.S."/>
        </authorList>
    </citation>
    <scope>INTERACTION WITH CHCHD3</scope>
</reference>
<reference key="34">
    <citation type="journal article" date="2012" name="J. Biol. Chem.">
        <title>Nucleophosmin (NPM1/B23) interacts with activating transcription factor 5 (ATF5) protein and promotes proteasome- and caspase-dependent ATF5 degradation in hepatocellular carcinoma cells.</title>
        <authorList>
            <person name="Liu X."/>
            <person name="Liu D."/>
            <person name="Qian D."/>
            <person name="Dai J."/>
            <person name="An Y."/>
            <person name="Jiang S."/>
            <person name="Stanley B."/>
            <person name="Yang J."/>
            <person name="Wang B."/>
            <person name="Liu X."/>
            <person name="Liu D.X."/>
        </authorList>
    </citation>
    <scope>FUNCTION</scope>
    <scope>INTERACTION WITH ATF5</scope>
</reference>
<reference key="35">
    <citation type="journal article" date="2012" name="J. Proteome Res.">
        <title>Resveratrol-induced changes of the human adipocyte secretion profile.</title>
        <authorList>
            <person name="Rosenow A."/>
            <person name="Noben J.P."/>
            <person name="Jocken J."/>
            <person name="Kallendrusch S."/>
            <person name="Fischer-Posovszky P."/>
            <person name="Mariman E.C."/>
            <person name="Renes J."/>
        </authorList>
    </citation>
    <scope>IDENTIFICATION BY MASS SPECTROMETRY [LARGE SCALE ANALYSIS]</scope>
</reference>
<reference key="36">
    <citation type="journal article" date="2013" name="Immunity">
        <title>The ubiquitin ligase Stub1 negatively modulates regulatory T cell suppressive activity by promoting degradation of the transcription factor Foxp3.</title>
        <authorList>
            <person name="Chen Z."/>
            <person name="Barbi J."/>
            <person name="Bu S."/>
            <person name="Yang H.Y."/>
            <person name="Li Z."/>
            <person name="Gao Y."/>
            <person name="Jinasena D."/>
            <person name="Fu J."/>
            <person name="Lin F."/>
            <person name="Chen C."/>
            <person name="Zhang J."/>
            <person name="Yu N."/>
            <person name="Li X."/>
            <person name="Shan Z."/>
            <person name="Nie J."/>
            <person name="Gao Z."/>
            <person name="Tian H."/>
            <person name="Li Y."/>
            <person name="Yao Z."/>
            <person name="Zheng Y."/>
            <person name="Park B.V."/>
            <person name="Pan Z."/>
            <person name="Zhang J."/>
            <person name="Dang E."/>
            <person name="Li Z."/>
            <person name="Wang H."/>
            <person name="Luo W."/>
            <person name="Li L."/>
            <person name="Semenza G.L."/>
            <person name="Zheng S.G."/>
            <person name="Loser K."/>
            <person name="Tsun A."/>
            <person name="Greene M.I."/>
            <person name="Pardoll D.M."/>
            <person name="Pan F."/>
            <person name="Li B."/>
        </authorList>
    </citation>
    <scope>IDENTIFICATION BY MASS SPECTROMETRY</scope>
    <scope>FUNCTION</scope>
    <scope>INTERACTION WITH FOXP3</scope>
</reference>
<reference key="37">
    <citation type="journal article" date="2013" name="J. Biol. Chem.">
        <title>Identification and characterization of a novel human methyltransferase modulating Hsp70 function through lysine methylation.</title>
        <authorList>
            <person name="Jakobsson M.E."/>
            <person name="Moen A."/>
            <person name="Bousset L."/>
            <person name="Egge-Jacobsen W."/>
            <person name="Kernstock S."/>
            <person name="Melki R."/>
            <person name="Falnes P.O."/>
        </authorList>
    </citation>
    <scope>METHYLATION AT LYS-561</scope>
    <scope>MUTAGENESIS OF LYS-561</scope>
    <scope>INTERACTION WITH METTL21A</scope>
</reference>
<reference key="38">
    <citation type="journal article" date="2013" name="J. Proteome Res.">
        <title>Toward a comprehensive characterization of a human cancer cell phosphoproteome.</title>
        <authorList>
            <person name="Zhou H."/>
            <person name="Di Palma S."/>
            <person name="Preisinger C."/>
            <person name="Peng M."/>
            <person name="Polat A.N."/>
            <person name="Heck A.J."/>
            <person name="Mohammed S."/>
        </authorList>
    </citation>
    <scope>IDENTIFICATION BY MASS SPECTROMETRY [LARGE SCALE ANALYSIS]</scope>
    <source>
        <tissue>Cervix carcinoma</tissue>
        <tissue>Erythroleukemia</tissue>
    </source>
</reference>
<reference key="39">
    <citation type="journal article" date="2013" name="Nature">
        <title>High-content genome-wide RNAi screens identify regulators of parkin upstream of mitophagy.</title>
        <authorList>
            <person name="Hasson S.A."/>
            <person name="Kane L.A."/>
            <person name="Yamano K."/>
            <person name="Huang C.H."/>
            <person name="Sliter D.A."/>
            <person name="Buehler E."/>
            <person name="Wang C."/>
            <person name="Heman-Ackah S.M."/>
            <person name="Hessa T."/>
            <person name="Guha R."/>
            <person name="Martin S.E."/>
            <person name="Youle R.J."/>
        </authorList>
    </citation>
    <scope>INTERACTION WITH PRKN</scope>
</reference>
<reference key="40">
    <citation type="journal article" date="2013" name="Trends Biochem. Sci.">
        <title>Hsp70 chaperone dynamics and molecular mechanism.</title>
        <authorList>
            <person name="Mayer M.P."/>
        </authorList>
    </citation>
    <scope>REVIEW</scope>
</reference>
<reference key="41">
    <citation type="journal article" date="2014" name="Biochem. Biophys. Res. Commun.">
        <title>Hsp70 and Hsp90 oppositely regulate TGF-beta signaling through CHIP/Stub1.</title>
        <authorList>
            <person name="Shang Y."/>
            <person name="Xu X."/>
            <person name="Duan X."/>
            <person name="Guo J."/>
            <person name="Wang Y."/>
            <person name="Ren F."/>
            <person name="He D."/>
            <person name="Chang Z."/>
        </authorList>
    </citation>
    <scope>FUNCTION</scope>
    <scope>INTERACTION WITH STUB1 AND SMAD3</scope>
</reference>
<reference key="42">
    <citation type="journal article" date="2014" name="J. Biol. Chem.">
        <title>Binding of human nucleotide exchange factors to heat shock protein 70 (Hsp70) generates functionally distinct complexes in vitro.</title>
        <authorList>
            <person name="Rauch J.N."/>
            <person name="Gestwicki J.E."/>
        </authorList>
    </citation>
    <scope>FUNCTION</scope>
    <scope>INTERACTION WITH BAG1; BAG2; BAG3 AND HSPH1</scope>
</reference>
<reference key="43">
    <citation type="journal article" date="2014" name="J. Biol. Chem.">
        <title>The molecular chaperone HSP70 binds to and stabilizes NOD2, an important protein involved in Crohn disease.</title>
        <authorList>
            <person name="Mohanan V."/>
            <person name="Grimes C.L."/>
        </authorList>
    </citation>
    <scope>INTERACTION WITH NOD2</scope>
</reference>
<reference key="44">
    <citation type="journal article" date="2014" name="J. Biol. Chem.">
        <title>RING finger protein RNF207, a novel regulator of cardiac excitation.</title>
        <authorList>
            <person name="Roder K."/>
            <person name="Werdich A.A."/>
            <person name="Li W."/>
            <person name="Liu M."/>
            <person name="Kim T.Y."/>
            <person name="Organ-Darling L.E."/>
            <person name="Moshal K.S."/>
            <person name="Hwang J.M."/>
            <person name="Lu Y."/>
            <person name="Choi B.R."/>
            <person name="MacRae C.A."/>
            <person name="Koren G."/>
        </authorList>
    </citation>
    <scope>INTERACTION WITH RNF207</scope>
</reference>
<reference key="45">
    <citation type="journal article" date="2014" name="J. Proteomics">
        <title>An enzyme assisted RP-RPLC approach for in-depth analysis of human liver phosphoproteome.</title>
        <authorList>
            <person name="Bian Y."/>
            <person name="Song C."/>
            <person name="Cheng K."/>
            <person name="Dong M."/>
            <person name="Wang F."/>
            <person name="Huang J."/>
            <person name="Sun D."/>
            <person name="Wang L."/>
            <person name="Ye M."/>
            <person name="Zou H."/>
        </authorList>
    </citation>
    <scope>IDENTIFICATION BY MASS SPECTROMETRY [LARGE SCALE ANALYSIS]</scope>
    <source>
        <tissue>Liver</tissue>
    </source>
</reference>
<reference key="46">
    <citation type="journal article" date="2014" name="Mol. Cell. Proteomics">
        <title>Immunoaffinity enrichment and mass spectrometry analysis of protein methylation.</title>
        <authorList>
            <person name="Guo A."/>
            <person name="Gu H."/>
            <person name="Zhou J."/>
            <person name="Mulhern D."/>
            <person name="Wang Y."/>
            <person name="Lee K.A."/>
            <person name="Yang V."/>
            <person name="Aguiar M."/>
            <person name="Kornhauser J."/>
            <person name="Jia X."/>
            <person name="Ren J."/>
            <person name="Beausoleil S.A."/>
            <person name="Silva J.C."/>
            <person name="Vemulapalli V."/>
            <person name="Bedford M.T."/>
            <person name="Comb M.J."/>
        </authorList>
    </citation>
    <scope>METHYLATION [LARGE SCALE ANALYSIS] AT ARG-469 AND LYS-561</scope>
    <scope>IDENTIFICATION BY MASS SPECTROMETRY [LARGE SCALE ANALYSIS]</scope>
    <source>
        <tissue>Colon carcinoma</tissue>
    </source>
</reference>
<reference key="47">
    <citation type="journal article" date="2015" name="Proteomics">
        <title>N-terminome analysis of the human mitochondrial proteome.</title>
        <authorList>
            <person name="Vaca Jacome A.S."/>
            <person name="Rabilloud T."/>
            <person name="Schaeffer-Reiss C."/>
            <person name="Rompais M."/>
            <person name="Ayoub D."/>
            <person name="Lane L."/>
            <person name="Bairoch A."/>
            <person name="Van Dorsselaer A."/>
            <person name="Carapito C."/>
        </authorList>
    </citation>
    <scope>IDENTIFICATION BY MASS SPECTROMETRY [LARGE SCALE ANALYSIS]</scope>
</reference>
<reference key="48">
    <citation type="journal article" date="2016" name="Biochem. Biophys. Res. Commun.">
        <title>A novel nuclear DnaJ protein, DNAJC8, can suppress the formation of spinocerebellar ataxia 3 polyglutamine aggregation in a J-domain independent manner.</title>
        <authorList>
            <person name="Ito N."/>
            <person name="Kamiguchi K."/>
            <person name="Nakanishi K."/>
            <person name="Sokolovskya A."/>
            <person name="Hirohashi Y."/>
            <person name="Tamura Y."/>
            <person name="Murai A."/>
            <person name="Yamamoto E."/>
            <person name="Kanaseki T."/>
            <person name="Tsukahara T."/>
            <person name="Kochin V."/>
            <person name="Chiba S."/>
            <person name="Shimohama S."/>
            <person name="Sato N."/>
            <person name="Torigoe T."/>
        </authorList>
    </citation>
    <scope>INTERACTION WITH DNAJC8</scope>
</reference>
<reference key="49">
    <citation type="journal article" date="2016" name="Cell Stress Chaperones">
        <title>The human HSP70 family of chaperones: where do we stand?</title>
        <authorList>
            <person name="Radons J."/>
        </authorList>
    </citation>
    <scope>REVIEW</scope>
</reference>
<reference key="50">
    <citation type="journal article" date="2016" name="Cell. Mol. Life Sci.">
        <title>HSP70 regulates the function of mitotic centrosomes.</title>
        <authorList>
            <person name="Fang C.T."/>
            <person name="Kuo H.H."/>
            <person name="Pan T.S."/>
            <person name="Yu F.C."/>
            <person name="Yih L.H."/>
        </authorList>
    </citation>
    <scope>FUNCTION</scope>
    <scope>INTERACTION WITH NEDD1</scope>
    <scope>SUBCELLULAR LOCATION</scope>
</reference>
<reference key="51">
    <citation type="journal article" date="2016" name="Nat. Commun.">
        <title>ARD1-mediated Hsp70 acetylation balances stress-induced protein refolding and degradation.</title>
        <authorList>
            <person name="Seo J.H."/>
            <person name="Park J.H."/>
            <person name="Lee E.J."/>
            <person name="Vo T.T."/>
            <person name="Choi H."/>
            <person name="Kim J.Y."/>
            <person name="Jang J.K."/>
            <person name="Wee H.J."/>
            <person name="Lee H.S."/>
            <person name="Jang S.H."/>
            <person name="Park Z.Y."/>
            <person name="Jeong J."/>
            <person name="Lee K.J."/>
            <person name="Seok S.H."/>
            <person name="Park J.Y."/>
            <person name="Lee B.J."/>
            <person name="Lee M.N."/>
            <person name="Oh G.T."/>
            <person name="Kim K.W."/>
        </authorList>
    </citation>
    <scope>FUNCTION</scope>
    <scope>ACETYLATION AT LYS-77</scope>
    <scope>MUTAGENESIS OF LYS-77</scope>
    <scope>INTERACTION WITH NAA10; HSP40; HOPX; STUB1; HSP90 AND HDAC4</scope>
</reference>
<reference key="52">
    <citation type="journal article" date="2017" name="J. Mol. Biol.">
        <title>BAG3 is a modular, scaffolding protein that physically links heat shock protein 70 (Hsp70) to the small heat shock proteins.</title>
        <authorList>
            <person name="Rauch J.N."/>
            <person name="Tse E."/>
            <person name="Freilich R."/>
            <person name="Mok S.A."/>
            <person name="Makley L.N."/>
            <person name="Southworth D.R."/>
            <person name="Gestwicki J.E."/>
        </authorList>
    </citation>
    <scope>INTERACTION WITH BAG3 AND HSPB8</scope>
</reference>
<reference key="53">
    <citation type="journal article" date="2017" name="Nat. Commun.">
        <title>HSP70-Hrd1 axis precludes the oncorepressor potential of N-terminal misfolded Blimp-1s in lymphoma cells.</title>
        <authorList>
            <person name="Wang W.F."/>
            <person name="Yan L."/>
            <person name="Liu Z."/>
            <person name="Liu L.X."/>
            <person name="Lin J."/>
            <person name="Liu Z.Y."/>
            <person name="Chen X.P."/>
            <person name="Zhang W."/>
            <person name="Xu Z.Z."/>
            <person name="Shi T."/>
            <person name="Li J.M."/>
            <person name="Zhao Y.L."/>
            <person name="Meng G."/>
            <person name="Xia Y."/>
            <person name="Li J.Y."/>
            <person name="Zhu J."/>
        </authorList>
    </citation>
    <scope>FUNCTION</scope>
    <scope>INVOLVEMENT IN ABC-DLBCL</scope>
</reference>
<reference key="54">
    <citation type="journal article" date="1999" name="Acta Crystallogr. D">
        <title>Structure of a new crystal form of human hsp70 ATPase domain.</title>
        <authorList>
            <person name="Osipiuk J."/>
            <person name="Walsh M.A."/>
            <person name="Freeman B.C."/>
            <person name="Morimoto R.I."/>
            <person name="Joachimiak A."/>
        </authorList>
    </citation>
    <scope>X-RAY CRYSTALLOGRAPHY (2.3 ANGSTROMS) OF 1-382 IN COMPLEX WITH ADP</scope>
    <scope>ATP-BINDING</scope>
</reference>
<reference key="55">
    <citation type="journal article" date="2010" name="Acta Crystallogr. D">
        <title>Direct inter-subdomain interactions switch between the closed and open forms of the Hsp70 nucleotide-binding domain in the nucleotide-free state.</title>
        <authorList>
            <person name="Shida M."/>
            <person name="Arakawa A."/>
            <person name="Ishii R."/>
            <person name="Kishishita S."/>
            <person name="Takagi T."/>
            <person name="Kukimoto-Niino M."/>
            <person name="Sugano S."/>
            <person name="Tanaka A."/>
            <person name="Shirouzu M."/>
            <person name="Yokoyama S."/>
        </authorList>
    </citation>
    <scope>X-RAY CRYSTALLOGRAPHY (1.77 ANGSTROMS) OF 389-641 IN COMPLEX WITH ATP ANALOG</scope>
    <scope>ATP-BINDING</scope>
</reference>
<reference key="56">
    <citation type="journal article" date="2010" name="PLoS ONE">
        <title>Crystal structures of the ATPase domains of four human Hsp70 isoforms: HSPA1L/Hsp70-hom, HSPA2/Hsp70-2, HSPA6/Hsp70B', and HSPA5/BiP/GRP78.</title>
        <authorList>
            <person name="Wisniewska M."/>
            <person name="Karlberg T."/>
            <person name="Lehtio L."/>
            <person name="Johansson I."/>
            <person name="Kotenyova T."/>
            <person name="Moche M."/>
            <person name="Schuler H."/>
        </authorList>
    </citation>
    <scope>X-RAY CRYSTALLOGRAPHY (2.14 ANGSTROMS) OF 1-387 IN COMPLEX WITH ADP</scope>
    <scope>ATP-BINDING</scope>
</reference>
<reference key="57">
    <citation type="journal article" date="2010" name="Structure">
        <title>The C-terminal BAG domain of BAG5 induces conformational changes of the Hsp70 nucleotide-binding domain for ADP-ATP exchange.</title>
        <authorList>
            <person name="Arakawa A."/>
            <person name="Handa N."/>
            <person name="Ohsawa N."/>
            <person name="Shida M."/>
            <person name="Kigawa T."/>
            <person name="Hayashi F."/>
            <person name="Shirouzu M."/>
            <person name="Yokoyama S."/>
        </authorList>
    </citation>
    <scope>X-RAY CRYSTALLOGRAPHY (2.3 ANGSTROMS) OF 1-388 IN COMPLEX WITH BAG5</scope>
</reference>
<reference key="58">
    <citation type="journal article" date="2011" name="Protein Sci.">
        <title>Biochemical and structural studies on the high affinity of Hsp70 for ADP.</title>
        <authorList>
            <person name="Arakawa A."/>
            <person name="Handa N."/>
            <person name="Shirouzu M."/>
            <person name="Yokoyama S."/>
        </authorList>
    </citation>
    <scope>X-RAY CRYSTALLOGRAPHY (1.58 ANGSTROMS) OF 1-388</scope>
    <scope>ATP-BINDING</scope>
    <scope>MUTAGENESIS OF ASP-10 AND ASP-199</scope>
</reference>
<accession>P0DMV8</accession>
<accession>B4E3B6</accession>
<accession>P08107</accession>
<accession>P19790</accession>
<accession>Q5JQI4</accession>
<accession>Q5SP17</accession>
<accession>Q9UQL9</accession>
<accession>Q9UQM0</accession>
<comment type="function">
    <text evidence="1 23 26 28 29 33 34 36 38 42 45">Molecular chaperone implicated in a wide variety of cellular processes, including protection of the proteome from stress, folding and transport of newly synthesized polypeptides, activation of proteolysis of misfolded proteins and the formation and dissociation of protein complexes. Plays a pivotal role in the protein quality control system, ensuring the correct folding of proteins, the re-folding of misfolded proteins and controlling the targeting of proteins for subsequent degradation. This is achieved through cycles of ATP binding, ATP hydrolysis and ADP release, mediated by co-chaperones. The co-chaperones have been shown to not only regulate different steps of the ATPase cycle, but they also have an individual specificity such that one co-chaperone may promote folding of a substrate while another may promote degradation. The affinity for polypeptides is regulated by its nucleotide bound state. In the ATP-bound form, it has a low affinity for substrate proteins. However, upon hydrolysis of the ATP to ADP, it undergoes a conformational change that increases its affinity for substrate proteins. It goes through repeated cycles of ATP hydrolysis and nucleotide exchange, which permits cycles of substrate binding and release. The co-chaperones are of three types: J-domain co-chaperones such as HSP40s (stimulate ATPase hydrolysis by HSP70), the nucleotide exchange factors (NEF) such as BAG1/2/3 (facilitate conversion of HSP70 from the ADP-bound to the ATP-bound state thereby promoting substrate release), and the TPR domain chaperones such as HOPX and STUB1 (PubMed:24012426, PubMed:24318877, PubMed:26865365). Maintains protein homeostasis during cellular stress through two opposing mechanisms: protein refolding and degradation. Its acetylation/deacetylation state determines whether it functions in protein refolding or protein degradation by controlling the competitive binding of co-chaperones HOPX and STUB1. During the early stress response, the acetylated form binds to HOPX which assists in chaperone-mediated protein refolding, thereafter, it is deacetylated and binds to ubiquitin ligase STUB1 that promotes ubiquitin-mediated protein degradation (PubMed:27708256). Regulates centrosome integrity during mitosis, and is required for the maintenance of a functional mitotic centrosome that supports the assembly of a bipolar mitotic spindle (PubMed:27137183). Enhances STUB1-mediated SMAD3 ubiquitination and degradation and facilitates STUB1-mediated inhibition of TGF-beta signaling (PubMed:24613385). Essential for STUB1-mediated ubiquitination and degradation of FOXP3 in regulatory T-cells (Treg) during inflammation (PubMed:23973223). Required as a co-chaperone for optimal STUB1/CHIP ubiquitination of NFATC3 (By similarity). Negatively regulates heat shock-induced HSF1 transcriptional activity during the attenuation and recovery phase period of the heat shock response (PubMed:9499401). Involved in the clearance of misfolded PRDM1/Blimp-1 proteins. Sequesters them in the cytoplasm and promotes their association with SYNV1/HRD1, leading to proteasomal degradation (PubMed:28842558).</text>
</comment>
<comment type="function">
    <text evidence="11">(Microbial infection) In case of rotavirus A infection, serves as a post-attachment receptor for the virus to facilitate entry into the cell.</text>
</comment>
<comment type="subunit">
    <text evidence="1 3 5 6 7 9 10 12 13 14 15 16 17 18 19 20 21 23 25 26 27 28 29 30 31 32 33 34 35 37 38">Component of the CatSper complex. Identified in a IGF2BP1-dependent mRNP granule complex containing untranslated mRNAs (PubMed:17289661). Interacts with CHCHD3, DNAJC7, IRAK1BP1, PPP5C and TSC2 (PubMed:12853476, PubMed:15383005, PubMed:15963462, PubMed:17233114, PubMed:18620420, PubMed:21081504). Interacts with TERT; the interaction occurs in the absence of the RNA component, TERC, and dissociates once the TERT complex has formed (PubMed:11274138). Interacts with TRIM5 (via B30.2/SPRY domain) (PubMed:20053985). Interacts with METTL21A (PubMed:23921388). Interacts with DNAAF2 (By similarity). Interacts with PRKN (PubMed:24270810). Interacts with FOXP3 (PubMed:23973223). Interacts with NOD2; the interaction enhances NOD2 stability (PubMed:24790089). Interacts with DNAJC9 (via J domain) (PubMed:17182002). Interacts with ATF5; the interaction protects ATF5 from degradation via proteasome-dependent and caspase-dependent processes (PubMed:22528486). Interacts with RNF207 (via the C-terminus); this interaction additively increases KCNH2 expression (PubMed:25281747). Interacts with HSF1 (via transactivation domain); this interaction results in the inhibition of heat shock- and HSF1-induced transcriptional activity during the attenuation and recovery phase period of the heat shock response (PubMed:7935376, PubMed:9499401). Interacts with NAA10, HSP40, HSP90 and HDAC4. Interacts (via C-terminus) with STUB1 (via TPR repeats) (By similarity). The acetylated form and the non-acetylated form interact with HOPX and STUB1 respectively (PubMed:27708256). Interacts with NEDD1 (PubMed:27137183). Interacts (via NBD) with BAG1, BAG2, BAG3 and HSPH1/HSP105 (PubMed:24318877). Interacts with SMAD3 (PubMed:24613385). Interacts with DNAJC8 (PubMed:27133716). Interacts with NLRP12 (PubMed:17947705). Interacts with PGLYRP (By similarity). Forms a ternary complex with BAG3 and HSPB8 (PubMed:27884606).</text>
</comment>
<comment type="interaction">
    <interactant intactId="EBI-11052499">
        <id>P0DMV8</id>
    </interactant>
    <interactant intactId="EBI-930964">
        <id>P54253</id>
        <label>ATXN1</label>
    </interactant>
    <organismsDiffer>false</organismsDiffer>
    <experiments>3</experiments>
</comment>
<comment type="interaction">
    <interactant intactId="EBI-11052499">
        <id>P0DMV8</id>
    </interactant>
    <interactant intactId="EBI-466029">
        <id>P42858</id>
        <label>HTT</label>
    </interactant>
    <organismsDiffer>false</organismsDiffer>
    <experiments>9</experiments>
</comment>
<comment type="interaction">
    <interactant intactId="EBI-11052499">
        <id>P0DMV8</id>
    </interactant>
    <interactant intactId="EBI-373144">
        <id>Q9GZQ8</id>
        <label>MAP1LC3B</label>
    </interactant>
    <organismsDiffer>false</organismsDiffer>
    <experiments>3</experiments>
</comment>
<comment type="interaction">
    <interactant intactId="EBI-11052499">
        <id>P0DMV8</id>
    </interactant>
    <interactant intactId="EBI-752420">
        <id>Q9NUX5</id>
        <label>POT1</label>
    </interactant>
    <organismsDiffer>false</organismsDiffer>
    <experiments>2</experiments>
</comment>
<comment type="interaction">
    <interactant intactId="EBI-11052499">
        <id>P0DMV8</id>
    </interactant>
    <interactant intactId="EBI-21251460">
        <id>O60260-5</id>
        <label>PRKN</label>
    </interactant>
    <organismsDiffer>false</organismsDiffer>
    <experiments>6</experiments>
</comment>
<comment type="interaction">
    <interactant intactId="EBI-11052499">
        <id>P0DMV8</id>
    </interactant>
    <interactant intactId="EBI-752185">
        <id>O75832</id>
        <label>PSMD10</label>
    </interactant>
    <organismsDiffer>false</organismsDiffer>
    <experiments>2</experiments>
</comment>
<comment type="interaction">
    <interactant intactId="EBI-11052499">
        <id>P0DMV8</id>
    </interactant>
    <interactant intactId="EBI-458391">
        <id>P04271</id>
        <label>S100B</label>
    </interactant>
    <organismsDiffer>false</organismsDiffer>
    <experiments>3</experiments>
</comment>
<comment type="interaction">
    <interactant intactId="EBI-11052499">
        <id>P0DMV8</id>
    </interactant>
    <interactant intactId="EBI-307104">
        <id>Q13501</id>
        <label>SQSTM1</label>
    </interactant>
    <organismsDiffer>false</organismsDiffer>
    <experiments>3</experiments>
</comment>
<comment type="interaction">
    <interactant intactId="EBI-11052499">
        <id>P0DMV8</id>
    </interactant>
    <interactant intactId="EBI-25892332">
        <id>P43405-2</id>
        <label>SYK</label>
    </interactant>
    <organismsDiffer>false</organismsDiffer>
    <experiments>3</experiments>
</comment>
<comment type="interaction">
    <interactant intactId="EBI-11052499">
        <id>P0DMV8</id>
    </interactant>
    <interactant intactId="EBI-13951712">
        <id>P04663</id>
        <label>HA</label>
    </interactant>
    <organismsDiffer>true</organismsDiffer>
    <experiments>4</experiments>
</comment>
<comment type="interaction">
    <interactant intactId="EBI-11052499">
        <id>P0DMV8</id>
    </interactant>
    <interactant intactId="EBI-13951617">
        <id>P04958</id>
        <label>tetX</label>
    </interactant>
    <organismsDiffer>true</organismsDiffer>
    <experiments>3</experiments>
</comment>
<comment type="subcellular location">
    <subcellularLocation>
        <location evidence="14">Cytoplasm</location>
    </subcellularLocation>
    <subcellularLocation>
        <location evidence="33">Nucleus</location>
    </subcellularLocation>
    <subcellularLocation>
        <location evidence="33">Cytoplasm</location>
        <location evidence="33">Cytoskeleton</location>
        <location evidence="33">Microtubule organizing center</location>
        <location evidence="33">Centrosome</location>
    </subcellularLocation>
    <subcellularLocation>
        <location evidence="3">Secreted</location>
    </subcellularLocation>
    <text>Localized in cytoplasmic mRNP granules containing untranslated mRNAs.</text>
</comment>
<comment type="alternative products">
    <event type="alternative splicing"/>
    <isoform>
        <id>P0DMV8-1</id>
        <name>1</name>
        <sequence type="displayed"/>
    </isoform>
    <isoform>
        <id>P0DMV8-2</id>
        <name>2</name>
        <sequence type="described" ref="VSP_044427"/>
    </isoform>
</comment>
<comment type="induction">
    <text>By heat shock.</text>
</comment>
<comment type="domain">
    <text evidence="47 48">The N-terminal nucleotide binding domain (NBD) (also known as the ATPase domain) is responsible for binding and hydrolyzing ATP. The C-terminal substrate-binding domain (SBD) (also known as peptide-binding domain) binds to the client/substrate proteins. The two domains are allosterically coupled so that, when ATP is bound to the NBD, the SBD binds relatively weakly to clients. When ADP is bound in the NBD, a conformational change enhances the affinity of the SBD for client proteins.</text>
</comment>
<comment type="PTM">
    <text evidence="34">In response to cellular stress, acetylated at Lys-77 by NA110 and then gradually deacetylated by HDAC4 at later stages. Acetylation enhances its chaperone activity and also determines whether it will function as a chaperone for protein refolding or degradation by controlling its binding to co-chaperones HOPX and STUB1. The acetylated form and the non-acetylated form bind to HOPX and STUB1 respectively. Acetylation also protects cells against various types of cellular stress.</text>
</comment>
<comment type="disease">
    <text evidence="36">In certain aggressive cases of activated B cell-like diffuse large B-cell lymphoma (ABC-DLBCL), plays a role in the cytoplasmic sequestration of misfolded N-terminal mutated PRDM1 proteins, promotes their association with SYNV1/HRD1 and degradation through the SYNV1-proteasome pathway. HSPA1A inhibition restores PRDM1 nuclear localization and transcriptional activity in lymphoma cell lines and suppresses growth in xenografts.</text>
</comment>
<comment type="similarity">
    <text evidence="46">Belongs to the heat shock protein 70 family.</text>
</comment>
<sequence>MAKAAAIGIDLGTTYSCVGVFQHGKVEIIANDQGNRTTPSYVAFTDTERLIGDAAKNQVALNPQNTVFDAKRLIGRKFGDPVVQSDMKHWPFQVINDGDKPKVQVSYKGETKAFYPEEISSMVLTKMKEIAEAYLGYPVTNAVITVPAYFNDSQRQATKDAGVIAGLNVLRIINEPTAAAIAYGLDRTGKGERNVLIFDLGGGTFDVSILTIDDGIFEVKATAGDTHLGGEDFDNRLVNHFVEEFKRKHKKDISQNKRAVRRLRTACERAKRTLSSSTQASLEIDSLFEGIDFYTSITRARFEELCSDLFRSTLEPVEKALRDAKLDKAQIHDLVLVGGSTRIPKVQKLLQDFFNGRDLNKSINPDEAVAYGAAVQAAILMGDKSENVQDLLLLDVAPLSLGLETAGGVMTALIKRNSTIPTKQTQIFTTYSDNQPGVLIQVYEGERAMTKDNNLLGRFELSGIPPAPRGVPQIEVTFDIDANGILNVTATDKSTGKANKITITNDKGRLSKEEIERMVQEAEKYKAEDEVQRERVSAKNALESYAFNMKSAVEDEGLKGKISEADKKKVLDKCQEVISWLDANTLAEKDEFEHKRKELEQVCNPIISGLYQGAGGPGPGGFGAQGPKGGSGSGPTIEEVD</sequence>
<dbReference type="EMBL" id="M11717">
    <property type="protein sequence ID" value="AAA52697.1"/>
    <property type="molecule type" value="Genomic_DNA"/>
</dbReference>
<dbReference type="EMBL" id="M59828">
    <property type="protein sequence ID" value="AAA63226.1"/>
    <property type="molecule type" value="Genomic_DNA"/>
</dbReference>
<dbReference type="EMBL" id="BA000025">
    <property type="protein sequence ID" value="BAB63300.1"/>
    <property type="molecule type" value="Genomic_DNA"/>
</dbReference>
<dbReference type="EMBL" id="AF134726">
    <property type="protein sequence ID" value="AAD21816.1"/>
    <property type="molecule type" value="Genomic_DNA"/>
</dbReference>
<dbReference type="EMBL" id="AK304652">
    <property type="protein sequence ID" value="BAG65428.1"/>
    <property type="molecule type" value="mRNA"/>
</dbReference>
<dbReference type="EMBL" id="DQ451402">
    <property type="protein sequence ID" value="ABD96830.1"/>
    <property type="molecule type" value="Genomic_DNA"/>
</dbReference>
<dbReference type="EMBL" id="AL671762">
    <property type="status" value="NOT_ANNOTATED_CDS"/>
    <property type="molecule type" value="Genomic_DNA"/>
</dbReference>
<dbReference type="EMBL" id="BC002453">
    <property type="protein sequence ID" value="AAH02453.1"/>
    <property type="molecule type" value="mRNA"/>
</dbReference>
<dbReference type="EMBL" id="M24743">
    <property type="protein sequence ID" value="AAA59844.1"/>
    <property type="molecule type" value="Genomic_DNA"/>
</dbReference>
<dbReference type="EMBL" id="X04676">
    <property type="protein sequence ID" value="CAA28381.1"/>
    <property type="molecule type" value="Genomic_DNA"/>
</dbReference>
<dbReference type="EMBL" id="X04677">
    <property type="protein sequence ID" value="CAA28382.1"/>
    <property type="molecule type" value="Genomic_DNA"/>
</dbReference>
<dbReference type="CCDS" id="CCDS34414.1">
    <molecule id="P0DMV8-1"/>
</dbReference>
<dbReference type="PIR" id="A29160">
    <property type="entry name" value="A29160"/>
</dbReference>
<dbReference type="PIR" id="A45871">
    <property type="entry name" value="A45871"/>
</dbReference>
<dbReference type="PIR" id="I59139">
    <property type="entry name" value="I59139"/>
</dbReference>
<dbReference type="PIR" id="I79540">
    <property type="entry name" value="I79540"/>
</dbReference>
<dbReference type="RefSeq" id="NP_005336.3">
    <molecule id="P0DMV8-1"/>
    <property type="nucleotide sequence ID" value="NM_005345.5"/>
</dbReference>
<dbReference type="RefSeq" id="NP_005337.2">
    <molecule id="P0DMV8-1"/>
    <property type="nucleotide sequence ID" value="NM_005346.4"/>
</dbReference>
<dbReference type="PDB" id="1HJO">
    <property type="method" value="X-ray"/>
    <property type="resolution" value="2.30 A"/>
    <property type="chains" value="A=3-382"/>
</dbReference>
<dbReference type="PDB" id="1S3X">
    <property type="method" value="X-ray"/>
    <property type="resolution" value="1.84 A"/>
    <property type="chains" value="A=1-382"/>
</dbReference>
<dbReference type="PDB" id="1XQS">
    <property type="method" value="X-ray"/>
    <property type="resolution" value="2.90 A"/>
    <property type="chains" value="C/D=184-371"/>
</dbReference>
<dbReference type="PDB" id="2E88">
    <property type="method" value="X-ray"/>
    <property type="resolution" value="1.80 A"/>
    <property type="chains" value="A=1-388"/>
</dbReference>
<dbReference type="PDB" id="2E8A">
    <property type="method" value="X-ray"/>
    <property type="resolution" value="1.77 A"/>
    <property type="chains" value="A=1-388"/>
</dbReference>
<dbReference type="PDB" id="2LMG">
    <property type="method" value="NMR"/>
    <property type="chains" value="A=537-610"/>
</dbReference>
<dbReference type="PDB" id="3A8Y">
    <property type="method" value="X-ray"/>
    <property type="resolution" value="2.30 A"/>
    <property type="chains" value="A/B=1-388"/>
</dbReference>
<dbReference type="PDB" id="3ATU">
    <property type="method" value="X-ray"/>
    <property type="resolution" value="1.65 A"/>
    <property type="chains" value="A=1-388"/>
</dbReference>
<dbReference type="PDB" id="3ATV">
    <property type="method" value="X-ray"/>
    <property type="resolution" value="1.58 A"/>
    <property type="chains" value="A=1-388"/>
</dbReference>
<dbReference type="PDB" id="3AY9">
    <property type="method" value="X-ray"/>
    <property type="resolution" value="1.75 A"/>
    <property type="chains" value="A=1-388"/>
</dbReference>
<dbReference type="PDB" id="3D2E">
    <property type="method" value="X-ray"/>
    <property type="resolution" value="2.35 A"/>
    <property type="chains" value="B/D=1-382"/>
</dbReference>
<dbReference type="PDB" id="3D2F">
    <property type="method" value="X-ray"/>
    <property type="resolution" value="2.30 A"/>
    <property type="chains" value="B/D=1-382"/>
</dbReference>
<dbReference type="PDB" id="3JXU">
    <property type="method" value="X-ray"/>
    <property type="resolution" value="2.14 A"/>
    <property type="chains" value="A=1-387"/>
</dbReference>
<dbReference type="PDB" id="3LOF">
    <property type="method" value="X-ray"/>
    <property type="resolution" value="2.40 A"/>
    <property type="chains" value="A/B/C/D/E/F=534-641"/>
</dbReference>
<dbReference type="PDB" id="3Q49">
    <property type="method" value="X-ray"/>
    <property type="resolution" value="1.54 A"/>
    <property type="chains" value="C=634-641"/>
</dbReference>
<dbReference type="PDB" id="4IO8">
    <property type="method" value="X-ray"/>
    <property type="resolution" value="2.58 A"/>
    <property type="chains" value="A=1-382"/>
</dbReference>
<dbReference type="PDB" id="4J8F">
    <property type="method" value="X-ray"/>
    <property type="resolution" value="2.70 A"/>
    <property type="chains" value="A=1-382"/>
</dbReference>
<dbReference type="PDB" id="4PO2">
    <property type="method" value="X-ray"/>
    <property type="resolution" value="2.00 A"/>
    <property type="chains" value="A/B=386-613"/>
</dbReference>
<dbReference type="PDB" id="4WV5">
    <property type="method" value="X-ray"/>
    <property type="resolution" value="2.04 A"/>
    <property type="chains" value="A/B=395-543"/>
</dbReference>
<dbReference type="PDB" id="4WV7">
    <property type="method" value="X-ray"/>
    <property type="resolution" value="2.42 A"/>
    <property type="chains" value="A/B=395-543"/>
</dbReference>
<dbReference type="PDB" id="5AQW">
    <property type="method" value="X-ray"/>
    <property type="resolution" value="1.53 A"/>
    <property type="chains" value="A=1-380"/>
</dbReference>
<dbReference type="PDB" id="5AQX">
    <property type="method" value="X-ray"/>
    <property type="resolution" value="2.12 A"/>
    <property type="chains" value="A=1-380"/>
</dbReference>
<dbReference type="PDB" id="5AQY">
    <property type="method" value="X-ray"/>
    <property type="resolution" value="1.56 A"/>
    <property type="chains" value="A=1-380"/>
</dbReference>
<dbReference type="PDB" id="5AQZ">
    <property type="method" value="X-ray"/>
    <property type="resolution" value="1.65 A"/>
    <property type="chains" value="A=1-380"/>
</dbReference>
<dbReference type="PDB" id="5AR0">
    <property type="method" value="X-ray"/>
    <property type="resolution" value="1.90 A"/>
    <property type="chains" value="A=1-380"/>
</dbReference>
<dbReference type="PDB" id="5BN8">
    <property type="method" value="X-ray"/>
    <property type="resolution" value="1.34 A"/>
    <property type="chains" value="A=1-388"/>
</dbReference>
<dbReference type="PDB" id="5BN9">
    <property type="method" value="X-ray"/>
    <property type="resolution" value="1.69 A"/>
    <property type="chains" value="A=1-388"/>
</dbReference>
<dbReference type="PDB" id="5BPL">
    <property type="method" value="X-ray"/>
    <property type="resolution" value="1.93 A"/>
    <property type="chains" value="A=1-388"/>
</dbReference>
<dbReference type="PDB" id="5BPM">
    <property type="method" value="X-ray"/>
    <property type="resolution" value="1.83 A"/>
    <property type="chains" value="A=1-388"/>
</dbReference>
<dbReference type="PDB" id="5BPN">
    <property type="method" value="X-ray"/>
    <property type="resolution" value="2.10 A"/>
    <property type="chains" value="A=1-388"/>
</dbReference>
<dbReference type="PDB" id="5GJJ">
    <property type="method" value="NMR"/>
    <property type="chains" value="A=385-641"/>
</dbReference>
<dbReference type="PDB" id="5MKR">
    <property type="method" value="X-ray"/>
    <property type="resolution" value="1.87 A"/>
    <property type="chains" value="A=1-380"/>
</dbReference>
<dbReference type="PDB" id="5MKS">
    <property type="method" value="X-ray"/>
    <property type="resolution" value="1.99 A"/>
    <property type="chains" value="A=1-380"/>
</dbReference>
<dbReference type="PDB" id="5XI9">
    <property type="method" value="NMR"/>
    <property type="chains" value="A=381-564"/>
</dbReference>
<dbReference type="PDB" id="5XIR">
    <property type="method" value="NMR"/>
    <property type="chains" value="A=381-564"/>
</dbReference>
<dbReference type="PDB" id="6FHK">
    <property type="method" value="X-ray"/>
    <property type="resolution" value="1.66 A"/>
    <property type="chains" value="A/B=1-381"/>
</dbReference>
<dbReference type="PDB" id="6G3R">
    <property type="method" value="X-ray"/>
    <property type="resolution" value="1.40 A"/>
    <property type="chains" value="A=3-382"/>
</dbReference>
<dbReference type="PDB" id="6G3S">
    <property type="method" value="X-ray"/>
    <property type="resolution" value="2.30 A"/>
    <property type="chains" value="A=3-382"/>
</dbReference>
<dbReference type="PDB" id="6JPV">
    <property type="method" value="X-ray"/>
    <property type="resolution" value="2.15 A"/>
    <property type="chains" value="A/B=395-537"/>
</dbReference>
<dbReference type="PDB" id="6K39">
    <property type="method" value="X-ray"/>
    <property type="resolution" value="1.40 A"/>
    <property type="chains" value="A/B=395-537"/>
</dbReference>
<dbReference type="PDB" id="6ZYI">
    <property type="method" value="X-ray"/>
    <property type="resolution" value="1.52 A"/>
    <property type="chains" value="A=4-381"/>
</dbReference>
<dbReference type="PDB" id="7FGM">
    <property type="method" value="X-ray"/>
    <property type="resolution" value="2.20 A"/>
    <property type="chains" value="A=1-382"/>
</dbReference>
<dbReference type="PDB" id="7GY4">
    <property type="method" value="X-ray"/>
    <property type="resolution" value="1.92 A"/>
    <property type="chains" value="A=1-380"/>
</dbReference>
<dbReference type="PDB" id="7GY5">
    <property type="method" value="X-ray"/>
    <property type="resolution" value="1.92 A"/>
    <property type="chains" value="A=1-380"/>
</dbReference>
<dbReference type="PDB" id="7GY6">
    <property type="method" value="X-ray"/>
    <property type="resolution" value="1.92 A"/>
    <property type="chains" value="A=1-380"/>
</dbReference>
<dbReference type="PDB" id="7GY7">
    <property type="method" value="X-ray"/>
    <property type="resolution" value="1.92 A"/>
    <property type="chains" value="A=1-380"/>
</dbReference>
<dbReference type="PDB" id="7GY8">
    <property type="method" value="X-ray"/>
    <property type="resolution" value="1.92 A"/>
    <property type="chains" value="A=1-380"/>
</dbReference>
<dbReference type="PDB" id="7GY9">
    <property type="method" value="X-ray"/>
    <property type="resolution" value="1.92 A"/>
    <property type="chains" value="A=1-380"/>
</dbReference>
<dbReference type="PDB" id="7GYA">
    <property type="method" value="X-ray"/>
    <property type="resolution" value="1.92 A"/>
    <property type="chains" value="A=1-380"/>
</dbReference>
<dbReference type="PDB" id="7GYB">
    <property type="method" value="X-ray"/>
    <property type="resolution" value="1.92 A"/>
    <property type="chains" value="A=1-380"/>
</dbReference>
<dbReference type="PDB" id="7GYC">
    <property type="method" value="X-ray"/>
    <property type="resolution" value="1.92 A"/>
    <property type="chains" value="A=1-380"/>
</dbReference>
<dbReference type="PDB" id="7GYD">
    <property type="method" value="X-ray"/>
    <property type="resolution" value="1.92 A"/>
    <property type="chains" value="A=1-380"/>
</dbReference>
<dbReference type="PDB" id="7GYE">
    <property type="method" value="X-ray"/>
    <property type="resolution" value="1.92 A"/>
    <property type="chains" value="A=1-380"/>
</dbReference>
<dbReference type="PDB" id="7GYF">
    <property type="method" value="X-ray"/>
    <property type="resolution" value="1.92 A"/>
    <property type="chains" value="A=1-380"/>
</dbReference>
<dbReference type="PDB" id="7GYG">
    <property type="method" value="X-ray"/>
    <property type="resolution" value="1.92 A"/>
    <property type="chains" value="A=1-380"/>
</dbReference>
<dbReference type="PDB" id="7GYH">
    <property type="method" value="X-ray"/>
    <property type="resolution" value="1.92 A"/>
    <property type="chains" value="A=1-380"/>
</dbReference>
<dbReference type="PDB" id="7GYI">
    <property type="method" value="X-ray"/>
    <property type="resolution" value="1.92 A"/>
    <property type="chains" value="A=1-380"/>
</dbReference>
<dbReference type="PDB" id="7GYJ">
    <property type="method" value="X-ray"/>
    <property type="resolution" value="2.15 A"/>
    <property type="chains" value="A=1-380"/>
</dbReference>
<dbReference type="PDB" id="7GYK">
    <property type="method" value="X-ray"/>
    <property type="resolution" value="2.15 A"/>
    <property type="chains" value="A=1-380"/>
</dbReference>
<dbReference type="PDB" id="7GYL">
    <property type="method" value="X-ray"/>
    <property type="resolution" value="2.15 A"/>
    <property type="chains" value="A=1-380"/>
</dbReference>
<dbReference type="PDB" id="7GYM">
    <property type="method" value="X-ray"/>
    <property type="resolution" value="2.15 A"/>
    <property type="chains" value="A=1-380"/>
</dbReference>
<dbReference type="PDB" id="7GYN">
    <property type="method" value="X-ray"/>
    <property type="resolution" value="2.15 A"/>
    <property type="chains" value="A=1-380"/>
</dbReference>
<dbReference type="PDB" id="7GYO">
    <property type="method" value="X-ray"/>
    <property type="resolution" value="2.15 A"/>
    <property type="chains" value="A=1-380"/>
</dbReference>
<dbReference type="PDB" id="7GYP">
    <property type="method" value="X-ray"/>
    <property type="resolution" value="2.15 A"/>
    <property type="chains" value="A=1-380"/>
</dbReference>
<dbReference type="PDB" id="7GYQ">
    <property type="method" value="X-ray"/>
    <property type="resolution" value="2.15 A"/>
    <property type="chains" value="A=1-380"/>
</dbReference>
<dbReference type="PDB" id="7GYR">
    <property type="method" value="X-ray"/>
    <property type="resolution" value="2.15 A"/>
    <property type="chains" value="A=1-380"/>
</dbReference>
<dbReference type="PDB" id="7GYS">
    <property type="method" value="X-ray"/>
    <property type="resolution" value="2.15 A"/>
    <property type="chains" value="A=1-380"/>
</dbReference>
<dbReference type="PDB" id="7GYT">
    <property type="method" value="X-ray"/>
    <property type="resolution" value="2.15 A"/>
    <property type="chains" value="A=1-380"/>
</dbReference>
<dbReference type="PDB" id="7GYU">
    <property type="method" value="X-ray"/>
    <property type="resolution" value="2.15 A"/>
    <property type="chains" value="A=1-380"/>
</dbReference>
<dbReference type="PDB" id="7GYV">
    <property type="method" value="X-ray"/>
    <property type="resolution" value="2.15 A"/>
    <property type="chains" value="A=1-380"/>
</dbReference>
<dbReference type="PDB" id="7GYW">
    <property type="method" value="X-ray"/>
    <property type="resolution" value="2.15 A"/>
    <property type="chains" value="A=1-380"/>
</dbReference>
<dbReference type="PDB" id="7GYX">
    <property type="method" value="X-ray"/>
    <property type="resolution" value="2.15 A"/>
    <property type="chains" value="A=1-380"/>
</dbReference>
<dbReference type="PDB" id="7KW7">
    <property type="method" value="EM"/>
    <property type="resolution" value="3.57 A"/>
    <property type="chains" value="C/D=1-641"/>
</dbReference>
<dbReference type="PDB" id="7Q4R">
    <property type="method" value="X-ray"/>
    <property type="resolution" value="1.79 A"/>
    <property type="chains" value="A=1-380"/>
</dbReference>
<dbReference type="PDBsum" id="1HJO"/>
<dbReference type="PDBsum" id="1S3X"/>
<dbReference type="PDBsum" id="1XQS"/>
<dbReference type="PDBsum" id="2E88"/>
<dbReference type="PDBsum" id="2E8A"/>
<dbReference type="PDBsum" id="2LMG"/>
<dbReference type="PDBsum" id="3A8Y"/>
<dbReference type="PDBsum" id="3ATU"/>
<dbReference type="PDBsum" id="3ATV"/>
<dbReference type="PDBsum" id="3AY9"/>
<dbReference type="PDBsum" id="3D2E"/>
<dbReference type="PDBsum" id="3D2F"/>
<dbReference type="PDBsum" id="3JXU"/>
<dbReference type="PDBsum" id="3LOF"/>
<dbReference type="PDBsum" id="3Q49"/>
<dbReference type="PDBsum" id="4IO8"/>
<dbReference type="PDBsum" id="4J8F"/>
<dbReference type="PDBsum" id="4PO2"/>
<dbReference type="PDBsum" id="4WV5"/>
<dbReference type="PDBsum" id="4WV7"/>
<dbReference type="PDBsum" id="5AQW"/>
<dbReference type="PDBsum" id="5AQX"/>
<dbReference type="PDBsum" id="5AQY"/>
<dbReference type="PDBsum" id="5AQZ"/>
<dbReference type="PDBsum" id="5AR0"/>
<dbReference type="PDBsum" id="5BN8"/>
<dbReference type="PDBsum" id="5BN9"/>
<dbReference type="PDBsum" id="5BPL"/>
<dbReference type="PDBsum" id="5BPM"/>
<dbReference type="PDBsum" id="5BPN"/>
<dbReference type="PDBsum" id="5GJJ"/>
<dbReference type="PDBsum" id="5MKR"/>
<dbReference type="PDBsum" id="5MKS"/>
<dbReference type="PDBsum" id="5XI9"/>
<dbReference type="PDBsum" id="5XIR"/>
<dbReference type="PDBsum" id="6FHK"/>
<dbReference type="PDBsum" id="6G3R"/>
<dbReference type="PDBsum" id="6G3S"/>
<dbReference type="PDBsum" id="6JPV"/>
<dbReference type="PDBsum" id="6K39"/>
<dbReference type="PDBsum" id="6ZYI"/>
<dbReference type="PDBsum" id="7FGM"/>
<dbReference type="PDBsum" id="7GY4"/>
<dbReference type="PDBsum" id="7GY5"/>
<dbReference type="PDBsum" id="7GY6"/>
<dbReference type="PDBsum" id="7GY7"/>
<dbReference type="PDBsum" id="7GY8"/>
<dbReference type="PDBsum" id="7GY9"/>
<dbReference type="PDBsum" id="7GYA"/>
<dbReference type="PDBsum" id="7GYB"/>
<dbReference type="PDBsum" id="7GYC"/>
<dbReference type="PDBsum" id="7GYD"/>
<dbReference type="PDBsum" id="7GYE"/>
<dbReference type="PDBsum" id="7GYF"/>
<dbReference type="PDBsum" id="7GYG"/>
<dbReference type="PDBsum" id="7GYH"/>
<dbReference type="PDBsum" id="7GYI"/>
<dbReference type="PDBsum" id="7GYJ"/>
<dbReference type="PDBsum" id="7GYK"/>
<dbReference type="PDBsum" id="7GYL"/>
<dbReference type="PDBsum" id="7GYM"/>
<dbReference type="PDBsum" id="7GYN"/>
<dbReference type="PDBsum" id="7GYO"/>
<dbReference type="PDBsum" id="7GYP"/>
<dbReference type="PDBsum" id="7GYQ"/>
<dbReference type="PDBsum" id="7GYR"/>
<dbReference type="PDBsum" id="7GYS"/>
<dbReference type="PDBsum" id="7GYT"/>
<dbReference type="PDBsum" id="7GYU"/>
<dbReference type="PDBsum" id="7GYV"/>
<dbReference type="PDBsum" id="7GYW"/>
<dbReference type="PDBsum" id="7GYX"/>
<dbReference type="PDBsum" id="7KW7"/>
<dbReference type="PDBsum" id="7Q4R"/>
<dbReference type="BMRB" id="P0DMV8"/>
<dbReference type="EMDB" id="EMD-23050"/>
<dbReference type="SASBDB" id="P0DMV8"/>
<dbReference type="SMR" id="P0DMV8"/>
<dbReference type="CORUM" id="P0DMV8"/>
<dbReference type="FunCoup" id="P0DMV8">
    <property type="interactions" value="1787"/>
</dbReference>
<dbReference type="IntAct" id="P0DMV8">
    <property type="interactions" value="63"/>
</dbReference>
<dbReference type="MINT" id="P0DMV8"/>
<dbReference type="STRING" id="9606.ENSP00000364801"/>
<dbReference type="BindingDB" id="P0DMV8"/>
<dbReference type="ChEMBL" id="CHEMBL5460"/>
<dbReference type="DrugBank" id="DB06258">
    <property type="generic name" value="Bimoclomol"/>
</dbReference>
<dbReference type="DrugBank" id="DB08846">
    <property type="generic name" value="Ellagic acid"/>
</dbReference>
<dbReference type="DrugBank" id="DB05444">
    <property type="generic name" value="Iroxanadine"/>
</dbReference>
<dbReference type="DrugBank" id="DB17309">
    <property type="generic name" value="Minnelide"/>
</dbReference>
<dbReference type="DrugCentral" id="P0DMV8"/>
<dbReference type="CarbonylDB" id="P0DMV8"/>
<dbReference type="GlyConnect" id="1295">
    <property type="glycosylation" value="2 N-Linked glycans (2 sites)"/>
</dbReference>
<dbReference type="GlyCosmos" id="P0DMV8">
    <property type="glycosylation" value="1 site, 1 glycan"/>
</dbReference>
<dbReference type="GlyGen" id="P0DMV8">
    <property type="glycosylation" value="3 sites, 2 N-linked glycans (1 site), 1 O-linked glycan (1 site)"/>
</dbReference>
<dbReference type="iPTMnet" id="P0DMV8"/>
<dbReference type="MetOSite" id="P0DMV8"/>
<dbReference type="PhosphoSitePlus" id="P0DMV8"/>
<dbReference type="SwissPalm" id="P0DMV8"/>
<dbReference type="BioMuta" id="HSPA1A"/>
<dbReference type="REPRODUCTION-2DPAGE" id="IPI00304925"/>
<dbReference type="jPOST" id="P0DMV8"/>
<dbReference type="MassIVE" id="P0DMV8"/>
<dbReference type="PaxDb" id="9606-ENSP00000364801"/>
<dbReference type="PeptideAtlas" id="P0DMV8"/>
<dbReference type="PRIDE" id="P0DMV8"/>
<dbReference type="Pumba" id="P0DMV8"/>
<dbReference type="ABCD" id="P0DMV8">
    <property type="antibodies" value="7 sequenced antibodies"/>
</dbReference>
<dbReference type="Antibodypedia" id="27819">
    <property type="antibodies" value="2140 antibodies from 46 providers"/>
</dbReference>
<dbReference type="DNASU" id="3303"/>
<dbReference type="Ensembl" id="ENST00000375651.7">
    <molecule id="P0DMV8-1"/>
    <property type="protein sequence ID" value="ENSP00000364802.5"/>
    <property type="gene ID" value="ENSG00000204389.10"/>
</dbReference>
<dbReference type="Ensembl" id="ENST00000400040.1">
    <property type="protein sequence ID" value="ENSP00000382915.1"/>
    <property type="gene ID" value="ENSG00000215328.6"/>
</dbReference>
<dbReference type="Ensembl" id="ENST00000430065.1">
    <molecule id="P0DMV8-1"/>
    <property type="protein sequence ID" value="ENSP00000404524.1"/>
    <property type="gene ID" value="ENSG00000235941.5"/>
</dbReference>
<dbReference type="Ensembl" id="ENST00000433487.1">
    <molecule id="P0DMV8-1"/>
    <property type="protein sequence ID" value="ENSP00000408907.1"/>
    <property type="gene ID" value="ENSG00000234475.5"/>
</dbReference>
<dbReference type="Ensembl" id="ENST00000441618.1">
    <molecule id="P0DMV8-1"/>
    <property type="protein sequence ID" value="ENSP00000406359.1"/>
    <property type="gene ID" value="ENSG00000237724.5"/>
</dbReference>
<dbReference type="GeneID" id="3303"/>
<dbReference type="GeneID" id="3304"/>
<dbReference type="KEGG" id="hsa:3303"/>
<dbReference type="KEGG" id="hsa:3304"/>
<dbReference type="MANE-Select" id="ENST00000375651.7">
    <property type="protein sequence ID" value="ENSP00000364802.5"/>
    <property type="RefSeq nucleotide sequence ID" value="NM_005345.6"/>
    <property type="RefSeq protein sequence ID" value="NP_005336.3"/>
</dbReference>
<dbReference type="AGR" id="HGNC:5232"/>
<dbReference type="AGR" id="HGNC:5233"/>
<dbReference type="CTD" id="3303"/>
<dbReference type="CTD" id="3304"/>
<dbReference type="DisGeNET" id="3303"/>
<dbReference type="DisGeNET" id="3304"/>
<dbReference type="GeneCards" id="HSPA1A"/>
<dbReference type="HGNC" id="HGNC:5232">
    <property type="gene designation" value="HSPA1A"/>
</dbReference>
<dbReference type="HPA" id="ENSG00000204389">
    <property type="expression patterns" value="Low tissue specificity"/>
</dbReference>
<dbReference type="MIM" id="140550">
    <property type="type" value="gene"/>
</dbReference>
<dbReference type="MIM" id="603012">
    <property type="type" value="gene"/>
</dbReference>
<dbReference type="neXtProt" id="NX_P0DMV8"/>
<dbReference type="OpenTargets" id="ENSG00000204388"/>
<dbReference type="OpenTargets" id="ENSG00000204389"/>
<dbReference type="VEuPathDB" id="HostDB:ENSG00000204389"/>
<dbReference type="eggNOG" id="KOG0101">
    <property type="taxonomic scope" value="Eukaryota"/>
</dbReference>
<dbReference type="InParanoid" id="P0DMV8"/>
<dbReference type="OMA" id="CNPIMTR"/>
<dbReference type="OrthoDB" id="9522975at2759"/>
<dbReference type="PAN-GO" id="P0DMV8">
    <property type="GO annotations" value="17 GO annotations based on evolutionary models"/>
</dbReference>
<dbReference type="PhylomeDB" id="P0DMV8"/>
<dbReference type="PathwayCommons" id="P0DMV8"/>
<dbReference type="Reactome" id="R-HSA-168330">
    <property type="pathway name" value="Viral RNP Complexes in the Host Cell Nucleus"/>
</dbReference>
<dbReference type="Reactome" id="R-HSA-3371453">
    <property type="pathway name" value="Regulation of HSF1-mediated heat shock response"/>
</dbReference>
<dbReference type="Reactome" id="R-HSA-3371497">
    <property type="pathway name" value="HSP90 chaperone cycle for steroid hormone receptors (SHR) in the presence of ligand"/>
</dbReference>
<dbReference type="Reactome" id="R-HSA-3371568">
    <property type="pathway name" value="Attenuation phase"/>
</dbReference>
<dbReference type="Reactome" id="R-HSA-3371571">
    <property type="pathway name" value="HSF1-dependent transactivation"/>
</dbReference>
<dbReference type="Reactome" id="R-HSA-450408">
    <property type="pathway name" value="AUF1 (hnRNP D0) binds and destabilizes mRNA"/>
</dbReference>
<dbReference type="Reactome" id="R-HSA-6798695">
    <property type="pathway name" value="Neutrophil degranulation"/>
</dbReference>
<dbReference type="Reactome" id="R-HSA-9833482">
    <property type="pathway name" value="PKR-mediated signaling"/>
</dbReference>
<dbReference type="Reactome" id="R-HSA-9841251">
    <property type="pathway name" value="Mitochondrial unfolded protein response (UPRmt)"/>
</dbReference>
<dbReference type="SignaLink" id="P0DMV8"/>
<dbReference type="SIGNOR" id="P0DMV8"/>
<dbReference type="BioGRID-ORCS" id="3303">
    <property type="hits" value="22 hits in 708 CRISPR screens"/>
</dbReference>
<dbReference type="BioGRID-ORCS" id="3304">
    <property type="hits" value="7 hits in 695 CRISPR screens"/>
</dbReference>
<dbReference type="CD-CODE" id="232F8A39">
    <property type="entry name" value="P-body"/>
</dbReference>
<dbReference type="CD-CODE" id="804901D1">
    <property type="entry name" value="Nuclear speckle"/>
</dbReference>
<dbReference type="CD-CODE" id="BEB5E62D">
    <property type="entry name" value="Anisosome"/>
</dbReference>
<dbReference type="CD-CODE" id="DEE660B4">
    <property type="entry name" value="Stress granule"/>
</dbReference>
<dbReference type="CD-CODE" id="F85A2E29">
    <property type="entry name" value="IMP1 RNP granule"/>
</dbReference>
<dbReference type="ChiTaRS" id="HSPA1A">
    <property type="organism name" value="human"/>
</dbReference>
<dbReference type="EvolutionaryTrace" id="P0DMV8"/>
<dbReference type="Pharos" id="P0DMV8">
    <property type="development level" value="Tchem"/>
</dbReference>
<dbReference type="PRO" id="PR:P0DMV8"/>
<dbReference type="Proteomes" id="UP000005640">
    <property type="component" value="Chromosome 6"/>
</dbReference>
<dbReference type="RNAct" id="P0DMV8">
    <property type="molecule type" value="protein"/>
</dbReference>
<dbReference type="Bgee" id="ENSG00000204389">
    <property type="expression patterns" value="Expressed in lower esophagus mucosa and 95 other cell types or tissues"/>
</dbReference>
<dbReference type="ExpressionAtlas" id="P0DMV8">
    <property type="expression patterns" value="baseline and differential"/>
</dbReference>
<dbReference type="GO" id="GO:0016235">
    <property type="term" value="C:aggresome"/>
    <property type="evidence" value="ECO:0000314"/>
    <property type="project" value="UniProtKB"/>
</dbReference>
<dbReference type="GO" id="GO:0072562">
    <property type="term" value="C:blood microparticle"/>
    <property type="evidence" value="ECO:0007005"/>
    <property type="project" value="UniProtKB"/>
</dbReference>
<dbReference type="GO" id="GO:0005814">
    <property type="term" value="C:centriole"/>
    <property type="evidence" value="ECO:0000314"/>
    <property type="project" value="UniProtKB"/>
</dbReference>
<dbReference type="GO" id="GO:0005813">
    <property type="term" value="C:centrosome"/>
    <property type="evidence" value="ECO:0000314"/>
    <property type="project" value="UniProtKB"/>
</dbReference>
<dbReference type="GO" id="GO:0005737">
    <property type="term" value="C:cytoplasm"/>
    <property type="evidence" value="ECO:0000314"/>
    <property type="project" value="UniProtKB"/>
</dbReference>
<dbReference type="GO" id="GO:0005829">
    <property type="term" value="C:cytosol"/>
    <property type="evidence" value="ECO:0000314"/>
    <property type="project" value="UniProtKB"/>
</dbReference>
<dbReference type="GO" id="GO:0005783">
    <property type="term" value="C:endoplasmic reticulum"/>
    <property type="evidence" value="ECO:0000304"/>
    <property type="project" value="UniProtKB"/>
</dbReference>
<dbReference type="GO" id="GO:0070062">
    <property type="term" value="C:extracellular exosome"/>
    <property type="evidence" value="ECO:0007005"/>
    <property type="project" value="UniProtKB"/>
</dbReference>
<dbReference type="GO" id="GO:0005576">
    <property type="term" value="C:extracellular region"/>
    <property type="evidence" value="ECO:0000304"/>
    <property type="project" value="Reactome"/>
</dbReference>
<dbReference type="GO" id="GO:0005615">
    <property type="term" value="C:extracellular space"/>
    <property type="evidence" value="ECO:0000314"/>
    <property type="project" value="UniProt"/>
</dbReference>
<dbReference type="GO" id="GO:1904813">
    <property type="term" value="C:ficolin-1-rich granule lumen"/>
    <property type="evidence" value="ECO:0000304"/>
    <property type="project" value="Reactome"/>
</dbReference>
<dbReference type="GO" id="GO:0005925">
    <property type="term" value="C:focal adhesion"/>
    <property type="evidence" value="ECO:0007005"/>
    <property type="project" value="UniProtKB"/>
</dbReference>
<dbReference type="GO" id="GO:0016234">
    <property type="term" value="C:inclusion body"/>
    <property type="evidence" value="ECO:0000314"/>
    <property type="project" value="BHF-UCL"/>
</dbReference>
<dbReference type="GO" id="GO:0005739">
    <property type="term" value="C:mitochondrion"/>
    <property type="evidence" value="ECO:0000304"/>
    <property type="project" value="UniProtKB"/>
</dbReference>
<dbReference type="GO" id="GO:0016607">
    <property type="term" value="C:nuclear speck"/>
    <property type="evidence" value="ECO:0000314"/>
    <property type="project" value="UniProtKB"/>
</dbReference>
<dbReference type="GO" id="GO:0005654">
    <property type="term" value="C:nucleoplasm"/>
    <property type="evidence" value="ECO:0000304"/>
    <property type="project" value="Reactome"/>
</dbReference>
<dbReference type="GO" id="GO:0005634">
    <property type="term" value="C:nucleus"/>
    <property type="evidence" value="ECO:0000314"/>
    <property type="project" value="UniProtKB"/>
</dbReference>
<dbReference type="GO" id="GO:0048471">
    <property type="term" value="C:perinuclear region of cytoplasm"/>
    <property type="evidence" value="ECO:0000314"/>
    <property type="project" value="UniProtKB"/>
</dbReference>
<dbReference type="GO" id="GO:0005886">
    <property type="term" value="C:plasma membrane"/>
    <property type="evidence" value="ECO:0000318"/>
    <property type="project" value="GO_Central"/>
</dbReference>
<dbReference type="GO" id="GO:0032991">
    <property type="term" value="C:protein-containing complex"/>
    <property type="evidence" value="ECO:0000314"/>
    <property type="project" value="UniProtKB"/>
</dbReference>
<dbReference type="GO" id="GO:1990904">
    <property type="term" value="C:ribonucleoprotein complex"/>
    <property type="evidence" value="ECO:0000314"/>
    <property type="project" value="UniProtKB"/>
</dbReference>
<dbReference type="GO" id="GO:0031982">
    <property type="term" value="C:vesicle"/>
    <property type="evidence" value="ECO:0007005"/>
    <property type="project" value="UniProtKB"/>
</dbReference>
<dbReference type="GO" id="GO:0005524">
    <property type="term" value="F:ATP binding"/>
    <property type="evidence" value="ECO:0000314"/>
    <property type="project" value="BHF-UCL"/>
</dbReference>
<dbReference type="GO" id="GO:0016887">
    <property type="term" value="F:ATP hydrolysis activity"/>
    <property type="evidence" value="ECO:0000314"/>
    <property type="project" value="UniProtKB"/>
</dbReference>
<dbReference type="GO" id="GO:0140545">
    <property type="term" value="F:ATP-dependent protein disaggregase activity"/>
    <property type="evidence" value="ECO:0000314"/>
    <property type="project" value="BHF-UCL"/>
</dbReference>
<dbReference type="GO" id="GO:0140662">
    <property type="term" value="F:ATP-dependent protein folding chaperone"/>
    <property type="evidence" value="ECO:0007669"/>
    <property type="project" value="InterPro"/>
</dbReference>
<dbReference type="GO" id="GO:0055131">
    <property type="term" value="F:C3HC4-type RING finger domain binding"/>
    <property type="evidence" value="ECO:0000353"/>
    <property type="project" value="BHF-UCL"/>
</dbReference>
<dbReference type="GO" id="GO:0045296">
    <property type="term" value="F:cadherin binding"/>
    <property type="evidence" value="ECO:0007005"/>
    <property type="project" value="BHF-UCL"/>
</dbReference>
<dbReference type="GO" id="GO:0038177">
    <property type="term" value="F:death receptor agonist activity"/>
    <property type="evidence" value="ECO:0000314"/>
    <property type="project" value="UniProt"/>
</dbReference>
<dbReference type="GO" id="GO:0031249">
    <property type="term" value="F:denatured protein binding"/>
    <property type="evidence" value="ECO:0000353"/>
    <property type="project" value="CAFA"/>
</dbReference>
<dbReference type="GO" id="GO:0097718">
    <property type="term" value="F:disordered domain specific binding"/>
    <property type="evidence" value="ECO:0000353"/>
    <property type="project" value="CAFA"/>
</dbReference>
<dbReference type="GO" id="GO:0019899">
    <property type="term" value="F:enzyme binding"/>
    <property type="evidence" value="ECO:0000353"/>
    <property type="project" value="BHF-UCL"/>
</dbReference>
<dbReference type="GO" id="GO:0001664">
    <property type="term" value="F:G protein-coupled receptor binding"/>
    <property type="evidence" value="ECO:0000314"/>
    <property type="project" value="ParkinsonsUK-UCL"/>
</dbReference>
<dbReference type="GO" id="GO:0031072">
    <property type="term" value="F:heat shock protein binding"/>
    <property type="evidence" value="ECO:0000353"/>
    <property type="project" value="BHF-UCL"/>
</dbReference>
<dbReference type="GO" id="GO:0042826">
    <property type="term" value="F:histone deacetylase binding"/>
    <property type="evidence" value="ECO:0000353"/>
    <property type="project" value="BHF-UCL"/>
</dbReference>
<dbReference type="GO" id="GO:0051787">
    <property type="term" value="F:misfolded protein binding"/>
    <property type="evidence" value="ECO:0000314"/>
    <property type="project" value="UniProtKB"/>
</dbReference>
<dbReference type="GO" id="GO:0044183">
    <property type="term" value="F:protein folding chaperone"/>
    <property type="evidence" value="ECO:0000314"/>
    <property type="project" value="BHF-UCL"/>
</dbReference>
<dbReference type="GO" id="GO:0048018">
    <property type="term" value="F:receptor ligand activity"/>
    <property type="evidence" value="ECO:0000314"/>
    <property type="project" value="UniProt"/>
</dbReference>
<dbReference type="GO" id="GO:0003723">
    <property type="term" value="F:RNA binding"/>
    <property type="evidence" value="ECO:0007005"/>
    <property type="project" value="UniProtKB"/>
</dbReference>
<dbReference type="GO" id="GO:0005102">
    <property type="term" value="F:signaling receptor binding"/>
    <property type="evidence" value="ECO:0000353"/>
    <property type="project" value="UniProtKB"/>
</dbReference>
<dbReference type="GO" id="GO:0003714">
    <property type="term" value="F:transcription corepressor activity"/>
    <property type="evidence" value="ECO:0000314"/>
    <property type="project" value="UniProtKB"/>
</dbReference>
<dbReference type="GO" id="GO:0140416">
    <property type="term" value="F:transcription regulator inhibitor activity"/>
    <property type="evidence" value="ECO:0000314"/>
    <property type="project" value="GO_Central"/>
</dbReference>
<dbReference type="GO" id="GO:0031625">
    <property type="term" value="F:ubiquitin protein ligase binding"/>
    <property type="evidence" value="ECO:0000353"/>
    <property type="project" value="ParkinsonsUK-UCL"/>
</dbReference>
<dbReference type="GO" id="GO:0051082">
    <property type="term" value="F:unfolded protein binding"/>
    <property type="evidence" value="ECO:0000314"/>
    <property type="project" value="UniProtKB"/>
</dbReference>
<dbReference type="GO" id="GO:0001618">
    <property type="term" value="F:virus receptor activity"/>
    <property type="evidence" value="ECO:0007669"/>
    <property type="project" value="UniProtKB-KW"/>
</dbReference>
<dbReference type="GO" id="GO:0046034">
    <property type="term" value="P:ATP metabolic process"/>
    <property type="evidence" value="ECO:0000314"/>
    <property type="project" value="BHF-UCL"/>
</dbReference>
<dbReference type="GO" id="GO:0070370">
    <property type="term" value="P:cellular heat acclimation"/>
    <property type="evidence" value="ECO:0000315"/>
    <property type="project" value="UniProtKB"/>
</dbReference>
<dbReference type="GO" id="GO:0034605">
    <property type="term" value="P:cellular response to heat"/>
    <property type="evidence" value="ECO:0000314"/>
    <property type="project" value="UniProtKB"/>
</dbReference>
<dbReference type="GO" id="GO:0034599">
    <property type="term" value="P:cellular response to oxidative stress"/>
    <property type="evidence" value="ECO:0000304"/>
    <property type="project" value="ParkinsonsUK-UCL"/>
</dbReference>
<dbReference type="GO" id="GO:0071383">
    <property type="term" value="P:cellular response to steroid hormone stimulus"/>
    <property type="evidence" value="ECO:0000304"/>
    <property type="project" value="Reactome"/>
</dbReference>
<dbReference type="GO" id="GO:0034620">
    <property type="term" value="P:cellular response to unfolded protein"/>
    <property type="evidence" value="ECO:0000315"/>
    <property type="project" value="ParkinsonsUK-UCL"/>
</dbReference>
<dbReference type="GO" id="GO:0051085">
    <property type="term" value="P:chaperone cofactor-dependent protein refolding"/>
    <property type="evidence" value="ECO:0000318"/>
    <property type="project" value="GO_Central"/>
</dbReference>
<dbReference type="GO" id="GO:0051131">
    <property type="term" value="P:chaperone-mediated protein complex assembly"/>
    <property type="evidence" value="ECO:0000314"/>
    <property type="project" value="CAFA"/>
</dbReference>
<dbReference type="GO" id="GO:0007041">
    <property type="term" value="P:lysosomal transport"/>
    <property type="evidence" value="ECO:0000250"/>
    <property type="project" value="UniProtKB"/>
</dbReference>
<dbReference type="GO" id="GO:0006402">
    <property type="term" value="P:mRNA catabolic process"/>
    <property type="evidence" value="ECO:0000314"/>
    <property type="project" value="UniProtKB"/>
</dbReference>
<dbReference type="GO" id="GO:0043066">
    <property type="term" value="P:negative regulation of apoptotic process"/>
    <property type="evidence" value="ECO:0000315"/>
    <property type="project" value="UniProtKB"/>
</dbReference>
<dbReference type="GO" id="GO:0030308">
    <property type="term" value="P:negative regulation of cell growth"/>
    <property type="evidence" value="ECO:0000315"/>
    <property type="project" value="UniProtKB"/>
</dbReference>
<dbReference type="GO" id="GO:0008285">
    <property type="term" value="P:negative regulation of cell population proliferation"/>
    <property type="evidence" value="ECO:0000315"/>
    <property type="project" value="UniProtKB"/>
</dbReference>
<dbReference type="GO" id="GO:1902236">
    <property type="term" value="P:negative regulation of endoplasmic reticulum stress-induced intrinsic apoptotic signaling pathway"/>
    <property type="evidence" value="ECO:0000314"/>
    <property type="project" value="ParkinsonsUK-UCL"/>
</dbReference>
<dbReference type="GO" id="GO:2001240">
    <property type="term" value="P:negative regulation of extrinsic apoptotic signaling pathway in absence of ligand"/>
    <property type="evidence" value="ECO:0000315"/>
    <property type="project" value="BHF-UCL"/>
</dbReference>
<dbReference type="GO" id="GO:0090084">
    <property type="term" value="P:negative regulation of inclusion body assembly"/>
    <property type="evidence" value="ECO:0000314"/>
    <property type="project" value="UniProtKB"/>
</dbReference>
<dbReference type="GO" id="GO:1901029">
    <property type="term" value="P:negative regulation of mitochondrial outer membrane permeabilization involved in apoptotic signaling pathway"/>
    <property type="evidence" value="ECO:0000314"/>
    <property type="project" value="ParkinsonsUK-UCL"/>
</dbReference>
<dbReference type="GO" id="GO:0031397">
    <property type="term" value="P:negative regulation of protein ubiquitination"/>
    <property type="evidence" value="ECO:0000314"/>
    <property type="project" value="ParkinsonsUK-UCL"/>
</dbReference>
<dbReference type="GO" id="GO:0000122">
    <property type="term" value="P:negative regulation of transcription by RNA polymerase II"/>
    <property type="evidence" value="ECO:0000314"/>
    <property type="project" value="UniProtKB"/>
</dbReference>
<dbReference type="GO" id="GO:0030512">
    <property type="term" value="P:negative regulation of transforming growth factor beta receptor signaling pathway"/>
    <property type="evidence" value="ECO:0000315"/>
    <property type="project" value="UniProtKB"/>
</dbReference>
<dbReference type="GO" id="GO:1902380">
    <property type="term" value="P:positive regulation of endoribonuclease activity"/>
    <property type="evidence" value="ECO:0000314"/>
    <property type="project" value="ParkinsonsUK-UCL"/>
</dbReference>
<dbReference type="GO" id="GO:0045648">
    <property type="term" value="P:positive regulation of erythrocyte differentiation"/>
    <property type="evidence" value="ECO:0000315"/>
    <property type="project" value="UniProtKB"/>
</dbReference>
<dbReference type="GO" id="GO:0010628">
    <property type="term" value="P:positive regulation of gene expression"/>
    <property type="evidence" value="ECO:0000315"/>
    <property type="project" value="BHF-UCL"/>
</dbReference>
<dbReference type="GO" id="GO:0032757">
    <property type="term" value="P:positive regulation of interleukin-8 production"/>
    <property type="evidence" value="ECO:0000315"/>
    <property type="project" value="UniProtKB"/>
</dbReference>
<dbReference type="GO" id="GO:0090063">
    <property type="term" value="P:positive regulation of microtubule nucleation"/>
    <property type="evidence" value="ECO:0000315"/>
    <property type="project" value="UniProtKB"/>
</dbReference>
<dbReference type="GO" id="GO:0051092">
    <property type="term" value="P:positive regulation of NF-kappaB transcription factor activity"/>
    <property type="evidence" value="ECO:0000315"/>
    <property type="project" value="UniProtKB"/>
</dbReference>
<dbReference type="GO" id="GO:0070434">
    <property type="term" value="P:positive regulation of nucleotide-binding oligomerization domain containing 2 signaling pathway"/>
    <property type="evidence" value="ECO:0000315"/>
    <property type="project" value="UniProtKB"/>
</dbReference>
<dbReference type="GO" id="GO:0032436">
    <property type="term" value="P:positive regulation of proteasomal ubiquitin-dependent protein catabolic process"/>
    <property type="evidence" value="ECO:0000314"/>
    <property type="project" value="UniProtKB"/>
</dbReference>
<dbReference type="GO" id="GO:0033120">
    <property type="term" value="P:positive regulation of RNA splicing"/>
    <property type="evidence" value="ECO:0000314"/>
    <property type="project" value="ParkinsonsUK-UCL"/>
</dbReference>
<dbReference type="GO" id="GO:1903265">
    <property type="term" value="P:positive regulation of tumor necrosis factor-mediated signaling pathway"/>
    <property type="evidence" value="ECO:0000315"/>
    <property type="project" value="UniProtKB"/>
</dbReference>
<dbReference type="GO" id="GO:0042026">
    <property type="term" value="P:protein refolding"/>
    <property type="evidence" value="ECO:0000314"/>
    <property type="project" value="UniProtKB"/>
</dbReference>
<dbReference type="GO" id="GO:0050821">
    <property type="term" value="P:protein stabilization"/>
    <property type="evidence" value="ECO:0000314"/>
    <property type="project" value="CAFA"/>
</dbReference>
<dbReference type="GO" id="GO:1901673">
    <property type="term" value="P:regulation of mitotic spindle assembly"/>
    <property type="evidence" value="ECO:0000315"/>
    <property type="project" value="UniProtKB"/>
</dbReference>
<dbReference type="GO" id="GO:0031396">
    <property type="term" value="P:regulation of protein ubiquitination"/>
    <property type="evidence" value="ECO:0000314"/>
    <property type="project" value="BHF-UCL"/>
</dbReference>
<dbReference type="GO" id="GO:0006986">
    <property type="term" value="P:response to unfolded protein"/>
    <property type="evidence" value="ECO:0000314"/>
    <property type="project" value="UniProtKB"/>
</dbReference>
<dbReference type="CDD" id="cd10233">
    <property type="entry name" value="ASKHA_NBD_HSP70_HSPA1"/>
    <property type="match status" value="1"/>
</dbReference>
<dbReference type="FunFam" id="2.60.34.10:FF:000002">
    <property type="entry name" value="Heat shock 70 kDa"/>
    <property type="match status" value="1"/>
</dbReference>
<dbReference type="FunFam" id="3.30.420.40:FF:000172">
    <property type="entry name" value="Heat shock 70 kDa protein"/>
    <property type="match status" value="1"/>
</dbReference>
<dbReference type="FunFam" id="3.30.30.30:FF:000001">
    <property type="entry name" value="heat shock 70 kDa protein-like"/>
    <property type="match status" value="1"/>
</dbReference>
<dbReference type="FunFam" id="3.30.420.40:FF:000028">
    <property type="entry name" value="heat shock 70 kDa protein-like"/>
    <property type="match status" value="1"/>
</dbReference>
<dbReference type="FunFam" id="3.30.420.40:FF:000135">
    <property type="entry name" value="Heat shock cognate 71 kDa protein"/>
    <property type="match status" value="1"/>
</dbReference>
<dbReference type="FunFam" id="3.90.640.10:FF:000134">
    <property type="entry name" value="Heat shock cognate 71 kDa protein"/>
    <property type="match status" value="1"/>
</dbReference>
<dbReference type="FunFam" id="1.20.1270.10:FF:000003">
    <property type="entry name" value="heat shock cognate 71 kDa protein-like"/>
    <property type="match status" value="1"/>
</dbReference>
<dbReference type="FunFam" id="3.30.420.40:FF:000026">
    <property type="entry name" value="Heat shock protein 70"/>
    <property type="match status" value="1"/>
</dbReference>
<dbReference type="Gene3D" id="1.20.1270.10">
    <property type="match status" value="1"/>
</dbReference>
<dbReference type="Gene3D" id="3.30.30.30">
    <property type="match status" value="1"/>
</dbReference>
<dbReference type="Gene3D" id="3.30.420.40">
    <property type="match status" value="2"/>
</dbReference>
<dbReference type="Gene3D" id="3.90.640.10">
    <property type="entry name" value="Actin, Chain A, domain 4"/>
    <property type="match status" value="1"/>
</dbReference>
<dbReference type="Gene3D" id="2.60.34.10">
    <property type="entry name" value="Substrate Binding Domain Of DNAk, Chain A, domain 1"/>
    <property type="match status" value="1"/>
</dbReference>
<dbReference type="InterPro" id="IPR043129">
    <property type="entry name" value="ATPase_NBD"/>
</dbReference>
<dbReference type="InterPro" id="IPR018181">
    <property type="entry name" value="Heat_shock_70_CS"/>
</dbReference>
<dbReference type="InterPro" id="IPR029048">
    <property type="entry name" value="HSP70_C_sf"/>
</dbReference>
<dbReference type="InterPro" id="IPR029047">
    <property type="entry name" value="HSP70_peptide-bd_sf"/>
</dbReference>
<dbReference type="InterPro" id="IPR013126">
    <property type="entry name" value="Hsp_70_fam"/>
</dbReference>
<dbReference type="NCBIfam" id="NF001413">
    <property type="entry name" value="PRK00290.1"/>
    <property type="match status" value="1"/>
</dbReference>
<dbReference type="PANTHER" id="PTHR19375">
    <property type="entry name" value="HEAT SHOCK PROTEIN 70KDA"/>
    <property type="match status" value="1"/>
</dbReference>
<dbReference type="Pfam" id="PF00012">
    <property type="entry name" value="HSP70"/>
    <property type="match status" value="1"/>
</dbReference>
<dbReference type="PRINTS" id="PR00301">
    <property type="entry name" value="HEATSHOCK70"/>
</dbReference>
<dbReference type="SUPFAM" id="SSF53067">
    <property type="entry name" value="Actin-like ATPase domain"/>
    <property type="match status" value="2"/>
</dbReference>
<dbReference type="SUPFAM" id="SSF100934">
    <property type="entry name" value="Heat shock protein 70kD (HSP70), C-terminal subdomain"/>
    <property type="match status" value="1"/>
</dbReference>
<dbReference type="SUPFAM" id="SSF100920">
    <property type="entry name" value="Heat shock protein 70kD (HSP70), peptide-binding domain"/>
    <property type="match status" value="1"/>
</dbReference>
<dbReference type="PROSITE" id="PS00297">
    <property type="entry name" value="HSP70_1"/>
    <property type="match status" value="1"/>
</dbReference>
<dbReference type="PROSITE" id="PS00329">
    <property type="entry name" value="HSP70_2"/>
    <property type="match status" value="1"/>
</dbReference>
<dbReference type="PROSITE" id="PS01036">
    <property type="entry name" value="HSP70_3"/>
    <property type="match status" value="1"/>
</dbReference>
<gene>
    <name type="primary">HSPA1A</name>
    <name evidence="43" type="synonym">HSP72</name>
    <name type="synonym">HSPA1</name>
    <name type="synonym">HSX70</name>
</gene>
<feature type="initiator methionine" description="Removed" evidence="50">
    <location>
        <position position="1"/>
    </location>
</feature>
<feature type="chain" id="PRO_0000078249" description="Heat shock 70 kDa protein 1A">
    <location>
        <begin position="2"/>
        <end position="641"/>
    </location>
</feature>
<feature type="region of interest" description="Nucleotide-binding domain (NBD)" evidence="2">
    <location>
        <begin position="2"/>
        <end position="386"/>
    </location>
</feature>
<feature type="region of interest" description="Substrate-binding domain (SBD)" evidence="2">
    <location>
        <begin position="394"/>
        <end position="509"/>
    </location>
</feature>
<feature type="region of interest" description="Disordered" evidence="4">
    <location>
        <begin position="614"/>
        <end position="641"/>
    </location>
</feature>
<feature type="compositionally biased region" description="Gly residues" evidence="4">
    <location>
        <begin position="614"/>
        <end position="633"/>
    </location>
</feature>
<feature type="binding site">
    <location>
        <begin position="12"/>
        <end position="15"/>
    </location>
    <ligand>
        <name>ATP</name>
        <dbReference type="ChEBI" id="CHEBI:30616"/>
    </ligand>
</feature>
<feature type="binding site">
    <location>
        <position position="71"/>
    </location>
    <ligand>
        <name>ATP</name>
        <dbReference type="ChEBI" id="CHEBI:30616"/>
    </ligand>
</feature>
<feature type="binding site">
    <location>
        <begin position="202"/>
        <end position="204"/>
    </location>
    <ligand>
        <name>ATP</name>
        <dbReference type="ChEBI" id="CHEBI:30616"/>
    </ligand>
</feature>
<feature type="binding site">
    <location>
        <begin position="268"/>
        <end position="275"/>
    </location>
    <ligand>
        <name>ATP</name>
        <dbReference type="ChEBI" id="CHEBI:30616"/>
    </ligand>
</feature>
<feature type="binding site">
    <location>
        <begin position="339"/>
        <end position="342"/>
    </location>
    <ligand>
        <name>ATP</name>
        <dbReference type="ChEBI" id="CHEBI:30616"/>
    </ligand>
</feature>
<feature type="modified residue" description="N-acetylalanine" evidence="50">
    <location>
        <position position="2"/>
    </location>
</feature>
<feature type="modified residue" description="N6-acetyllysine" evidence="34">
    <location>
        <position position="77"/>
    </location>
</feature>
<feature type="modified residue" description="N6-acetyllysine" evidence="51">
    <location>
        <position position="108"/>
    </location>
</feature>
<feature type="modified residue" description="N6-acetyllysine" evidence="51">
    <location>
        <position position="246"/>
    </location>
</feature>
<feature type="modified residue" description="N6-acetyllysine" evidence="51">
    <location>
        <position position="348"/>
    </location>
</feature>
<feature type="modified residue" description="Omega-N-methylarginine" evidence="53">
    <location>
        <position position="469"/>
    </location>
</feature>
<feature type="modified residue" description="N6,N6,N6-trimethyllysine; by METTL21A; alternate" evidence="24 25 53">
    <location>
        <position position="561"/>
    </location>
</feature>
<feature type="modified residue" description="N6,N6-dimethyllysine; alternate" evidence="53">
    <location>
        <position position="561"/>
    </location>
</feature>
<feature type="modified residue" description="Phosphoserine" evidence="52">
    <location>
        <position position="631"/>
    </location>
</feature>
<feature type="modified residue" description="Phosphoserine" evidence="52">
    <location>
        <position position="633"/>
    </location>
</feature>
<feature type="modified residue" description="Phosphothreonine" evidence="52">
    <location>
        <position position="636"/>
    </location>
</feature>
<feature type="splice variant" id="VSP_044427" description="In isoform 2." evidence="41">
    <location>
        <begin position="96"/>
        <end position="150"/>
    </location>
</feature>
<feature type="sequence variant" id="VAR_029053" description="In dbSNP:rs562047." evidence="8 39">
    <original>E</original>
    <variation>D</variation>
    <location>
        <position position="110"/>
    </location>
</feature>
<feature type="mutagenesis site" description="Reduces affinity for ADP." evidence="22">
    <original>D</original>
    <variation>A</variation>
    <location>
        <position position="10"/>
    </location>
</feature>
<feature type="mutagenesis site" description="No loss of acetylation and ATPase activity. Exhibits normal protein refolding activity during the early phase but exhibits defects in ubiquitin-mediated protein degradation during the later phase." evidence="34">
    <original>K</original>
    <variation>Q</variation>
    <location>
        <position position="77"/>
    </location>
</feature>
<feature type="mutagenesis site" description="Significant loss of acetylation and ATPase activity. Decreased binding to HOPX and HSP90 and increased binding to STUB1 and NAA10. Impaired capacity for protein refolding during the early phase after stress but shows normal protein degradation activity in the late phase." evidence="34">
    <original>K</original>
    <variation>R</variation>
    <location>
        <position position="77"/>
    </location>
</feature>
<feature type="mutagenesis site" description="Reduces affinity for ADP." evidence="22">
    <original>D</original>
    <variation>A</variation>
    <location>
        <position position="199"/>
    </location>
</feature>
<feature type="mutagenesis site" description="Complete loss of in vitro methylation by METTL21A." evidence="24 25">
    <original>K</original>
    <variation>R</variation>
    <location>
        <position position="561"/>
    </location>
</feature>
<feature type="sequence conflict" description="In Ref. 1; AAA52697 and 10; CAA28381." evidence="46" ref="1 10">
    <original>I</original>
    <variation>V</variation>
    <location>
        <position position="7"/>
    </location>
</feature>
<feature type="sequence conflict" description="In Ref. 5; BAG65428." evidence="46" ref="5">
    <original>N</original>
    <variation>D</variation>
    <location>
        <position position="355"/>
    </location>
</feature>
<feature type="sequence conflict" description="In Ref. 1; AAA52697." evidence="46" ref="1">
    <original>A</original>
    <variation>G</variation>
    <location>
        <position position="370"/>
    </location>
</feature>
<feature type="sequence conflict" description="In Ref. 1; AAA52697." evidence="46" ref="1">
    <location>
        <position position="469"/>
    </location>
</feature>
<feature type="sequence conflict" description="In Ref. 5; BAG65428." evidence="46" ref="5">
    <original>K</original>
    <variation>N</variation>
    <location>
        <position position="497"/>
    </location>
</feature>
<feature type="strand" evidence="59">
    <location>
        <begin position="7"/>
        <end position="10"/>
    </location>
</feature>
<feature type="strand" evidence="59">
    <location>
        <begin position="13"/>
        <end position="22"/>
    </location>
</feature>
<feature type="strand" evidence="59">
    <location>
        <begin position="25"/>
        <end position="28"/>
    </location>
</feature>
<feature type="strand" evidence="59">
    <location>
        <begin position="36"/>
        <end position="39"/>
    </location>
</feature>
<feature type="strand" evidence="59">
    <location>
        <begin position="42"/>
        <end position="44"/>
    </location>
</feature>
<feature type="strand" evidence="59">
    <location>
        <begin position="49"/>
        <end position="51"/>
    </location>
</feature>
<feature type="helix" evidence="59">
    <location>
        <begin position="53"/>
        <end position="56"/>
    </location>
</feature>
<feature type="turn" evidence="59">
    <location>
        <begin position="57"/>
        <end position="61"/>
    </location>
</feature>
<feature type="helix" evidence="59">
    <location>
        <begin position="63"/>
        <end position="65"/>
    </location>
</feature>
<feature type="strand" evidence="63">
    <location>
        <begin position="66"/>
        <end position="68"/>
    </location>
</feature>
<feature type="helix" evidence="59">
    <location>
        <begin position="70"/>
        <end position="72"/>
    </location>
</feature>
<feature type="turn" evidence="59">
    <location>
        <begin position="73"/>
        <end position="75"/>
    </location>
</feature>
<feature type="helix" evidence="59">
    <location>
        <begin position="81"/>
        <end position="86"/>
    </location>
</feature>
<feature type="helix" evidence="59">
    <location>
        <begin position="87"/>
        <end position="89"/>
    </location>
</feature>
<feature type="strand" evidence="59">
    <location>
        <begin position="91"/>
        <end position="97"/>
    </location>
</feature>
<feature type="strand" evidence="59">
    <location>
        <begin position="100"/>
        <end position="107"/>
    </location>
</feature>
<feature type="strand" evidence="59">
    <location>
        <begin position="110"/>
        <end position="114"/>
    </location>
</feature>
<feature type="helix" evidence="59">
    <location>
        <begin position="116"/>
        <end position="135"/>
    </location>
</feature>
<feature type="strand" evidence="59">
    <location>
        <begin position="141"/>
        <end position="146"/>
    </location>
</feature>
<feature type="helix" evidence="59">
    <location>
        <begin position="152"/>
        <end position="164"/>
    </location>
</feature>
<feature type="strand" evidence="59">
    <location>
        <begin position="168"/>
        <end position="174"/>
    </location>
</feature>
<feature type="helix" evidence="59">
    <location>
        <begin position="175"/>
        <end position="182"/>
    </location>
</feature>
<feature type="helix" evidence="59">
    <location>
        <begin position="185"/>
        <end position="187"/>
    </location>
</feature>
<feature type="strand" evidence="55">
    <location>
        <begin position="189"/>
        <end position="191"/>
    </location>
</feature>
<feature type="strand" evidence="59">
    <location>
        <begin position="193"/>
        <end position="200"/>
    </location>
</feature>
<feature type="strand" evidence="59">
    <location>
        <begin position="205"/>
        <end position="213"/>
    </location>
</feature>
<feature type="strand" evidence="59">
    <location>
        <begin position="216"/>
        <end position="225"/>
    </location>
</feature>
<feature type="helix" evidence="65">
    <location>
        <begin position="226"/>
        <end position="228"/>
    </location>
</feature>
<feature type="helix" evidence="59">
    <location>
        <begin position="230"/>
        <end position="249"/>
    </location>
</feature>
<feature type="helix" evidence="54">
    <location>
        <begin position="253"/>
        <end position="255"/>
    </location>
</feature>
<feature type="helix" evidence="59">
    <location>
        <begin position="257"/>
        <end position="274"/>
    </location>
</feature>
<feature type="strand" evidence="59">
    <location>
        <begin position="277"/>
        <end position="288"/>
    </location>
</feature>
<feature type="strand" evidence="59">
    <location>
        <begin position="291"/>
        <end position="298"/>
    </location>
</feature>
<feature type="helix" evidence="59">
    <location>
        <begin position="299"/>
        <end position="305"/>
    </location>
</feature>
<feature type="helix" evidence="59">
    <location>
        <begin position="307"/>
        <end position="312"/>
    </location>
</feature>
<feature type="helix" evidence="59">
    <location>
        <begin position="314"/>
        <end position="324"/>
    </location>
</feature>
<feature type="helix" evidence="59">
    <location>
        <begin position="328"/>
        <end position="330"/>
    </location>
</feature>
<feature type="strand" evidence="59">
    <location>
        <begin position="333"/>
        <end position="338"/>
    </location>
</feature>
<feature type="helix" evidence="59">
    <location>
        <begin position="339"/>
        <end position="342"/>
    </location>
</feature>
<feature type="helix" evidence="59">
    <location>
        <begin position="344"/>
        <end position="353"/>
    </location>
</feature>
<feature type="turn" evidence="59">
    <location>
        <begin position="354"/>
        <end position="356"/>
    </location>
</feature>
<feature type="turn" evidence="59">
    <location>
        <begin position="365"/>
        <end position="367"/>
    </location>
</feature>
<feature type="helix" evidence="59">
    <location>
        <begin position="368"/>
        <end position="380"/>
    </location>
</feature>
<feature type="strand" evidence="60">
    <location>
        <begin position="391"/>
        <end position="393"/>
    </location>
</feature>
<feature type="strand" evidence="64">
    <location>
        <begin position="401"/>
        <end position="405"/>
    </location>
</feature>
<feature type="turn" evidence="64">
    <location>
        <begin position="406"/>
        <end position="408"/>
    </location>
</feature>
<feature type="strand" evidence="64">
    <location>
        <begin position="409"/>
        <end position="414"/>
    </location>
</feature>
<feature type="strand" evidence="64">
    <location>
        <begin position="419"/>
        <end position="428"/>
    </location>
</feature>
<feature type="strand" evidence="61">
    <location>
        <begin position="433"/>
        <end position="435"/>
    </location>
</feature>
<feature type="strand" evidence="64">
    <location>
        <begin position="437"/>
        <end position="446"/>
    </location>
</feature>
<feature type="helix" evidence="64">
    <location>
        <begin position="450"/>
        <end position="452"/>
    </location>
</feature>
<feature type="strand" evidence="64">
    <location>
        <begin position="453"/>
        <end position="462"/>
    </location>
</feature>
<feature type="strand" evidence="62">
    <location>
        <begin position="468"/>
        <end position="470"/>
    </location>
</feature>
<feature type="strand" evidence="64">
    <location>
        <begin position="474"/>
        <end position="480"/>
    </location>
</feature>
<feature type="turn" evidence="62">
    <location>
        <begin position="482"/>
        <end position="484"/>
    </location>
</feature>
<feature type="strand" evidence="64">
    <location>
        <begin position="486"/>
        <end position="492"/>
    </location>
</feature>
<feature type="turn" evidence="64">
    <location>
        <begin position="493"/>
        <end position="495"/>
    </location>
</feature>
<feature type="strand" evidence="64">
    <location>
        <begin position="498"/>
        <end position="503"/>
    </location>
</feature>
<feature type="helix" evidence="64">
    <location>
        <begin position="506"/>
        <end position="508"/>
    </location>
</feature>
<feature type="helix" evidence="64">
    <location>
        <begin position="512"/>
        <end position="524"/>
    </location>
</feature>
<feature type="helix" evidence="64">
    <location>
        <begin position="526"/>
        <end position="535"/>
    </location>
</feature>
<feature type="helix" evidence="56">
    <location>
        <begin position="538"/>
        <end position="553"/>
    </location>
</feature>
<feature type="helix" evidence="57">
    <location>
        <begin position="556"/>
        <end position="558"/>
    </location>
</feature>
<feature type="helix" evidence="57">
    <location>
        <begin position="564"/>
        <end position="583"/>
    </location>
</feature>
<feature type="helix" evidence="57">
    <location>
        <begin position="589"/>
        <end position="612"/>
    </location>
</feature>
<feature type="strand" evidence="58">
    <location>
        <begin position="637"/>
        <end position="639"/>
    </location>
</feature>
<keyword id="KW-0002">3D-structure</keyword>
<keyword id="KW-0007">Acetylation</keyword>
<keyword id="KW-0025">Alternative splicing</keyword>
<keyword id="KW-0067">ATP-binding</keyword>
<keyword id="KW-0143">Chaperone</keyword>
<keyword id="KW-0963">Cytoplasm</keyword>
<keyword id="KW-0206">Cytoskeleton</keyword>
<keyword id="KW-0903">Direct protein sequencing</keyword>
<keyword id="KW-1183">Host cell receptor for virus entry</keyword>
<keyword id="KW-0945">Host-virus interaction</keyword>
<keyword id="KW-0488">Methylation</keyword>
<keyword id="KW-0547">Nucleotide-binding</keyword>
<keyword id="KW-0539">Nucleus</keyword>
<keyword id="KW-0597">Phosphoprotein</keyword>
<keyword id="KW-0675">Receptor</keyword>
<keyword id="KW-1185">Reference proteome</keyword>
<keyword id="KW-0964">Secreted</keyword>
<keyword id="KW-0346">Stress response</keyword>
<protein>
    <recommendedName>
        <fullName evidence="49">Heat shock 70 kDa protein 1A</fullName>
    </recommendedName>
    <alternativeName>
        <fullName>Heat shock 70 kDa protein 1</fullName>
        <shortName evidence="40 44">HSP70-1</shortName>
        <shortName>HSP70.1</shortName>
    </alternativeName>
    <alternativeName>
        <fullName>Heat shock protein family A member 1A</fullName>
    </alternativeName>
</protein>
<evidence type="ECO:0000250" key="1">
    <source>
        <dbReference type="UniProtKB" id="P0DMW0"/>
    </source>
</evidence>
<evidence type="ECO:0000250" key="2">
    <source>
        <dbReference type="UniProtKB" id="P11142"/>
    </source>
</evidence>
<evidence type="ECO:0000250" key="3">
    <source>
        <dbReference type="UniProtKB" id="Q61696"/>
    </source>
</evidence>
<evidence type="ECO:0000256" key="4">
    <source>
        <dbReference type="SAM" id="MobiDB-lite"/>
    </source>
</evidence>
<evidence type="ECO:0000269" key="5">
    <source>
    </source>
</evidence>
<evidence type="ECO:0000269" key="6">
    <source>
    </source>
</evidence>
<evidence type="ECO:0000269" key="7">
    <source>
    </source>
</evidence>
<evidence type="ECO:0000269" key="8">
    <source>
    </source>
</evidence>
<evidence type="ECO:0000269" key="9">
    <source>
    </source>
</evidence>
<evidence type="ECO:0000269" key="10">
    <source>
    </source>
</evidence>
<evidence type="ECO:0000269" key="11">
    <source>
    </source>
</evidence>
<evidence type="ECO:0000269" key="12">
    <source>
    </source>
</evidence>
<evidence type="ECO:0000269" key="13">
    <source>
    </source>
</evidence>
<evidence type="ECO:0000269" key="14">
    <source>
    </source>
</evidence>
<evidence type="ECO:0000269" key="15">
    <source>
    </source>
</evidence>
<evidence type="ECO:0000269" key="16">
    <source>
    </source>
</evidence>
<evidence type="ECO:0000269" key="17">
    <source>
    </source>
</evidence>
<evidence type="ECO:0000269" key="18">
    <source>
    </source>
</evidence>
<evidence type="ECO:0000269" key="19">
    <source>
    </source>
</evidence>
<evidence type="ECO:0000269" key="20">
    <source>
    </source>
</evidence>
<evidence type="ECO:0000269" key="21">
    <source>
    </source>
</evidence>
<evidence type="ECO:0000269" key="22">
    <source>
    </source>
</evidence>
<evidence type="ECO:0000269" key="23">
    <source>
    </source>
</evidence>
<evidence type="ECO:0000269" key="24">
    <source>
    </source>
</evidence>
<evidence type="ECO:0000269" key="25">
    <source>
    </source>
</evidence>
<evidence type="ECO:0000269" key="26">
    <source>
    </source>
</evidence>
<evidence type="ECO:0000269" key="27">
    <source>
    </source>
</evidence>
<evidence type="ECO:0000269" key="28">
    <source>
    </source>
</evidence>
<evidence type="ECO:0000269" key="29">
    <source>
    </source>
</evidence>
<evidence type="ECO:0000269" key="30">
    <source>
    </source>
</evidence>
<evidence type="ECO:0000269" key="31">
    <source>
    </source>
</evidence>
<evidence type="ECO:0000269" key="32">
    <source>
    </source>
</evidence>
<evidence type="ECO:0000269" key="33">
    <source>
    </source>
</evidence>
<evidence type="ECO:0000269" key="34">
    <source>
    </source>
</evidence>
<evidence type="ECO:0000269" key="35">
    <source>
    </source>
</evidence>
<evidence type="ECO:0000269" key="36">
    <source>
    </source>
</evidence>
<evidence type="ECO:0000269" key="37">
    <source>
    </source>
</evidence>
<evidence type="ECO:0000269" key="38">
    <source>
    </source>
</evidence>
<evidence type="ECO:0000269" key="39">
    <source ref="6"/>
</evidence>
<evidence type="ECO:0000303" key="40">
    <source>
    </source>
</evidence>
<evidence type="ECO:0000303" key="41">
    <source>
    </source>
</evidence>
<evidence type="ECO:0000303" key="42">
    <source>
    </source>
</evidence>
<evidence type="ECO:0000303" key="43">
    <source>
    </source>
</evidence>
<evidence type="ECO:0000303" key="44">
    <source>
    </source>
</evidence>
<evidence type="ECO:0000303" key="45">
    <source>
    </source>
</evidence>
<evidence type="ECO:0000305" key="46"/>
<evidence type="ECO:0000305" key="47">
    <source>
    </source>
</evidence>
<evidence type="ECO:0000305" key="48">
    <source>
    </source>
</evidence>
<evidence type="ECO:0000312" key="49">
    <source>
        <dbReference type="HGNC" id="HGNC:5232"/>
    </source>
</evidence>
<evidence type="ECO:0007744" key="50">
    <source>
    </source>
</evidence>
<evidence type="ECO:0007744" key="51">
    <source>
    </source>
</evidence>
<evidence type="ECO:0007744" key="52">
    <source>
    </source>
</evidence>
<evidence type="ECO:0007744" key="53">
    <source>
    </source>
</evidence>
<evidence type="ECO:0007829" key="54">
    <source>
        <dbReference type="PDB" id="2E88"/>
    </source>
</evidence>
<evidence type="ECO:0007829" key="55">
    <source>
        <dbReference type="PDB" id="2E8A"/>
    </source>
</evidence>
<evidence type="ECO:0007829" key="56">
    <source>
        <dbReference type="PDB" id="2LMG"/>
    </source>
</evidence>
<evidence type="ECO:0007829" key="57">
    <source>
        <dbReference type="PDB" id="3LOF"/>
    </source>
</evidence>
<evidence type="ECO:0007829" key="58">
    <source>
        <dbReference type="PDB" id="3Q49"/>
    </source>
</evidence>
<evidence type="ECO:0007829" key="59">
    <source>
        <dbReference type="PDB" id="5BN8"/>
    </source>
</evidence>
<evidence type="ECO:0007829" key="60">
    <source>
        <dbReference type="PDB" id="5GJJ"/>
    </source>
</evidence>
<evidence type="ECO:0007829" key="61">
    <source>
        <dbReference type="PDB" id="5XI9"/>
    </source>
</evidence>
<evidence type="ECO:0007829" key="62">
    <source>
        <dbReference type="PDB" id="5XIR"/>
    </source>
</evidence>
<evidence type="ECO:0007829" key="63">
    <source>
        <dbReference type="PDB" id="6FHK"/>
    </source>
</evidence>
<evidence type="ECO:0007829" key="64">
    <source>
        <dbReference type="PDB" id="6K39"/>
    </source>
</evidence>
<evidence type="ECO:0007829" key="65">
    <source>
        <dbReference type="PDB" id="7Q4R"/>
    </source>
</evidence>